<gene>
    <name type="primary">LAMP2</name>
</gene>
<name>LAMP2_HUMAN</name>
<organism>
    <name type="scientific">Homo sapiens</name>
    <name type="common">Human</name>
    <dbReference type="NCBI Taxonomy" id="9606"/>
    <lineage>
        <taxon>Eukaryota</taxon>
        <taxon>Metazoa</taxon>
        <taxon>Chordata</taxon>
        <taxon>Craniata</taxon>
        <taxon>Vertebrata</taxon>
        <taxon>Euteleostomi</taxon>
        <taxon>Mammalia</taxon>
        <taxon>Eutheria</taxon>
        <taxon>Euarchontoglires</taxon>
        <taxon>Primates</taxon>
        <taxon>Haplorrhini</taxon>
        <taxon>Catarrhini</taxon>
        <taxon>Hominidae</taxon>
        <taxon>Homo</taxon>
    </lineage>
</organism>
<keyword id="KW-0002">3D-structure</keyword>
<keyword id="KW-0025">Alternative splicing</keyword>
<keyword id="KW-0072">Autophagy</keyword>
<keyword id="KW-1003">Cell membrane</keyword>
<keyword id="KW-0968">Cytoplasmic vesicle</keyword>
<keyword id="KW-0903">Direct protein sequencing</keyword>
<keyword id="KW-0225">Disease variant</keyword>
<keyword id="KW-1015">Disulfide bond</keyword>
<keyword id="KW-0967">Endosome</keyword>
<keyword id="KW-0322">Glycogen storage disease</keyword>
<keyword id="KW-0325">Glycoprotein</keyword>
<keyword id="KW-0458">Lysosome</keyword>
<keyword id="KW-0472">Membrane</keyword>
<keyword id="KW-1267">Proteomics identification</keyword>
<keyword id="KW-1185">Reference proteome</keyword>
<keyword id="KW-0732">Signal</keyword>
<keyword id="KW-0812">Transmembrane</keyword>
<keyword id="KW-1133">Transmembrane helix</keyword>
<dbReference type="EMBL" id="J04183">
    <property type="protein sequence ID" value="AAA60383.1"/>
    <property type="molecule type" value="mRNA"/>
</dbReference>
<dbReference type="EMBL" id="L09717">
    <property type="protein sequence ID" value="AAB41647.1"/>
    <property type="molecule type" value="Genomic_DNA"/>
</dbReference>
<dbReference type="EMBL" id="L09709">
    <property type="protein sequence ID" value="AAB41647.1"/>
    <property type="status" value="JOINED"/>
    <property type="molecule type" value="Genomic_DNA"/>
</dbReference>
<dbReference type="EMBL" id="L09710">
    <property type="protein sequence ID" value="AAB41647.1"/>
    <property type="status" value="JOINED"/>
    <property type="molecule type" value="Genomic_DNA"/>
</dbReference>
<dbReference type="EMBL" id="L09711">
    <property type="protein sequence ID" value="AAB41647.1"/>
    <property type="status" value="JOINED"/>
    <property type="molecule type" value="Genomic_DNA"/>
</dbReference>
<dbReference type="EMBL" id="L09712">
    <property type="protein sequence ID" value="AAB41647.1"/>
    <property type="status" value="JOINED"/>
    <property type="molecule type" value="Genomic_DNA"/>
</dbReference>
<dbReference type="EMBL" id="L09713">
    <property type="protein sequence ID" value="AAB41647.1"/>
    <property type="status" value="JOINED"/>
    <property type="molecule type" value="Genomic_DNA"/>
</dbReference>
<dbReference type="EMBL" id="L09714">
    <property type="protein sequence ID" value="AAB41647.1"/>
    <property type="status" value="JOINED"/>
    <property type="molecule type" value="Genomic_DNA"/>
</dbReference>
<dbReference type="EMBL" id="L09715">
    <property type="protein sequence ID" value="AAB41647.1"/>
    <property type="status" value="JOINED"/>
    <property type="molecule type" value="Genomic_DNA"/>
</dbReference>
<dbReference type="EMBL" id="L09716">
    <property type="protein sequence ID" value="AAB41647.1"/>
    <property type="status" value="JOINED"/>
    <property type="molecule type" value="Genomic_DNA"/>
</dbReference>
<dbReference type="EMBL" id="X77196">
    <property type="protein sequence ID" value="CAA54416.1"/>
    <property type="molecule type" value="mRNA"/>
</dbReference>
<dbReference type="EMBL" id="S79873">
    <property type="protein sequence ID" value="AAB35426.1"/>
    <property type="molecule type" value="mRNA"/>
</dbReference>
<dbReference type="EMBL" id="U36336">
    <property type="protein sequence ID" value="AAA91149.1"/>
    <property type="molecule type" value="mRNA"/>
</dbReference>
<dbReference type="EMBL" id="AY561849">
    <property type="protein sequence ID" value="AAS67876.1"/>
    <property type="molecule type" value="mRNA"/>
</dbReference>
<dbReference type="EMBL" id="AK291090">
    <property type="protein sequence ID" value="BAF83779.1"/>
    <property type="molecule type" value="mRNA"/>
</dbReference>
<dbReference type="EMBL" id="AC002476">
    <property type="protein sequence ID" value="AAB67313.1"/>
    <property type="molecule type" value="Genomic_DNA"/>
</dbReference>
<dbReference type="EMBL" id="AC002476">
    <property type="protein sequence ID" value="AAB67314.1"/>
    <property type="molecule type" value="Genomic_DNA"/>
</dbReference>
<dbReference type="EMBL" id="CH471107">
    <property type="protein sequence ID" value="EAX11881.1"/>
    <property type="molecule type" value="Genomic_DNA"/>
</dbReference>
<dbReference type="EMBL" id="CH471107">
    <property type="protein sequence ID" value="EAX11882.1"/>
    <property type="molecule type" value="Genomic_DNA"/>
</dbReference>
<dbReference type="EMBL" id="CH471107">
    <property type="protein sequence ID" value="EAX11883.1"/>
    <property type="molecule type" value="Genomic_DNA"/>
</dbReference>
<dbReference type="EMBL" id="CH471107">
    <property type="protein sequence ID" value="EAX11884.1"/>
    <property type="molecule type" value="Genomic_DNA"/>
</dbReference>
<dbReference type="EMBL" id="BC002965">
    <property type="protein sequence ID" value="AAH02965.1"/>
    <property type="molecule type" value="mRNA"/>
</dbReference>
<dbReference type="CCDS" id="CCDS14599.1">
    <molecule id="P13473-1"/>
</dbReference>
<dbReference type="CCDS" id="CCDS14600.1">
    <molecule id="P13473-2"/>
</dbReference>
<dbReference type="CCDS" id="CCDS48159.1">
    <molecule id="P13473-3"/>
</dbReference>
<dbReference type="PIR" id="JC2414">
    <property type="entry name" value="B31959"/>
</dbReference>
<dbReference type="PIR" id="JC4317">
    <property type="entry name" value="JC4317"/>
</dbReference>
<dbReference type="RefSeq" id="NP_001116078.1">
    <molecule id="P13473-3"/>
    <property type="nucleotide sequence ID" value="NM_001122606.1"/>
</dbReference>
<dbReference type="RefSeq" id="NP_002285.1">
    <molecule id="P13473-1"/>
    <property type="nucleotide sequence ID" value="NM_002294.3"/>
</dbReference>
<dbReference type="RefSeq" id="NP_054701.1">
    <molecule id="P13473-2"/>
    <property type="nucleotide sequence ID" value="NM_013995.2"/>
</dbReference>
<dbReference type="PDB" id="2MOF">
    <property type="method" value="NMR"/>
    <property type="chains" value="A=369-410"/>
</dbReference>
<dbReference type="PDB" id="2MOM">
    <property type="method" value="NMR"/>
    <property type="chains" value="A/B/C=369-410"/>
</dbReference>
<dbReference type="PDBsum" id="2MOF"/>
<dbReference type="PDBsum" id="2MOM"/>
<dbReference type="BMRB" id="P13473"/>
<dbReference type="SMR" id="P13473"/>
<dbReference type="BioGRID" id="110114">
    <property type="interactions" value="632"/>
</dbReference>
<dbReference type="FunCoup" id="P13473">
    <property type="interactions" value="1506"/>
</dbReference>
<dbReference type="IntAct" id="P13473">
    <property type="interactions" value="321"/>
</dbReference>
<dbReference type="MINT" id="P13473"/>
<dbReference type="STRING" id="9606.ENSP00000408411"/>
<dbReference type="ChEMBL" id="CHEMBL5465542"/>
<dbReference type="TCDB" id="9.A.16.1.2">
    <property type="family name" value="the lysosomal protein import (lpi) family"/>
</dbReference>
<dbReference type="GlyConnect" id="356">
    <property type="glycosylation" value="115 N-Linked glycans (12 sites), 3 O-Linked glycans"/>
</dbReference>
<dbReference type="GlyCosmos" id="P13473">
    <property type="glycosylation" value="26 sites, 142 glycans"/>
</dbReference>
<dbReference type="GlyGen" id="P13473">
    <property type="glycosylation" value="31 sites, 304 N-linked glycans (14 sites), 1 N-linked;o-linked glycan (1 site), 6 O-linked glycans (14 sites)"/>
</dbReference>
<dbReference type="iPTMnet" id="P13473"/>
<dbReference type="PhosphoSitePlus" id="P13473"/>
<dbReference type="SwissPalm" id="P13473"/>
<dbReference type="BioMuta" id="LAMP2"/>
<dbReference type="DMDM" id="1708854"/>
<dbReference type="CPTAC" id="CPTAC-1494"/>
<dbReference type="CPTAC" id="CPTAC-689"/>
<dbReference type="jPOST" id="P13473"/>
<dbReference type="MassIVE" id="P13473"/>
<dbReference type="PaxDb" id="9606-ENSP00000408411"/>
<dbReference type="PeptideAtlas" id="P13473"/>
<dbReference type="ProteomicsDB" id="52910">
    <molecule id="P13473-1"/>
</dbReference>
<dbReference type="ProteomicsDB" id="52911">
    <molecule id="P13473-2"/>
</dbReference>
<dbReference type="ProteomicsDB" id="52912">
    <molecule id="P13473-3"/>
</dbReference>
<dbReference type="Pumba" id="P13473"/>
<dbReference type="Antibodypedia" id="3938">
    <property type="antibodies" value="1320 antibodies from 52 providers"/>
</dbReference>
<dbReference type="DNASU" id="3920"/>
<dbReference type="Ensembl" id="ENST00000200639.9">
    <molecule id="P13473-1"/>
    <property type="protein sequence ID" value="ENSP00000200639.4"/>
    <property type="gene ID" value="ENSG00000005893.17"/>
</dbReference>
<dbReference type="Ensembl" id="ENST00000371335.4">
    <molecule id="P13473-2"/>
    <property type="protein sequence ID" value="ENSP00000360386.4"/>
    <property type="gene ID" value="ENSG00000005893.17"/>
</dbReference>
<dbReference type="Ensembl" id="ENST00000434600.6">
    <molecule id="P13473-3"/>
    <property type="protein sequence ID" value="ENSP00000408411.2"/>
    <property type="gene ID" value="ENSG00000005893.17"/>
</dbReference>
<dbReference type="GeneID" id="3920"/>
<dbReference type="KEGG" id="hsa:3920"/>
<dbReference type="MANE-Select" id="ENST00000200639.9">
    <property type="protein sequence ID" value="ENSP00000200639.4"/>
    <property type="RefSeq nucleotide sequence ID" value="NM_002294.3"/>
    <property type="RefSeq protein sequence ID" value="NP_002285.1"/>
</dbReference>
<dbReference type="UCSC" id="uc004ess.5">
    <molecule id="P13473-1"/>
    <property type="organism name" value="human"/>
</dbReference>
<dbReference type="AGR" id="HGNC:6501"/>
<dbReference type="CTD" id="3920"/>
<dbReference type="DisGeNET" id="3920"/>
<dbReference type="GeneCards" id="LAMP2"/>
<dbReference type="GeneReviews" id="LAMP2"/>
<dbReference type="HGNC" id="HGNC:6501">
    <property type="gene designation" value="LAMP2"/>
</dbReference>
<dbReference type="HPA" id="ENSG00000005893">
    <property type="expression patterns" value="Low tissue specificity"/>
</dbReference>
<dbReference type="MalaCards" id="LAMP2"/>
<dbReference type="MIM" id="300257">
    <property type="type" value="phenotype"/>
</dbReference>
<dbReference type="MIM" id="309060">
    <property type="type" value="gene"/>
</dbReference>
<dbReference type="neXtProt" id="NX_P13473"/>
<dbReference type="OpenTargets" id="ENSG00000005893"/>
<dbReference type="Orphanet" id="34587">
    <property type="disease" value="Danon disease"/>
</dbReference>
<dbReference type="PharmGKB" id="PA30285"/>
<dbReference type="VEuPathDB" id="HostDB:ENSG00000005893"/>
<dbReference type="eggNOG" id="KOG4818">
    <property type="taxonomic scope" value="Eukaryota"/>
</dbReference>
<dbReference type="GeneTree" id="ENSGT00950000182899"/>
<dbReference type="HOGENOM" id="CLU_055379_2_0_1"/>
<dbReference type="InParanoid" id="P13473"/>
<dbReference type="OMA" id="CHPQTAQ"/>
<dbReference type="OrthoDB" id="6232933at2759"/>
<dbReference type="PAN-GO" id="P13473">
    <property type="GO annotations" value="7 GO annotations based on evolutionary models"/>
</dbReference>
<dbReference type="PhylomeDB" id="P13473"/>
<dbReference type="TreeFam" id="TF316339"/>
<dbReference type="PathwayCommons" id="P13473"/>
<dbReference type="Reactome" id="R-HSA-114608">
    <property type="pathway name" value="Platelet degranulation"/>
</dbReference>
<dbReference type="Reactome" id="R-HSA-6798695">
    <property type="pathway name" value="Neutrophil degranulation"/>
</dbReference>
<dbReference type="Reactome" id="R-HSA-9613829">
    <property type="pathway name" value="Chaperone Mediated Autophagy"/>
</dbReference>
<dbReference type="SignaLink" id="P13473"/>
<dbReference type="SIGNOR" id="P13473"/>
<dbReference type="BioGRID-ORCS" id="3920">
    <property type="hits" value="10 hits in 786 CRISPR screens"/>
</dbReference>
<dbReference type="ChiTaRS" id="LAMP2">
    <property type="organism name" value="human"/>
</dbReference>
<dbReference type="EvolutionaryTrace" id="P13473"/>
<dbReference type="GeneWiki" id="LAMP2"/>
<dbReference type="GenomeRNAi" id="3920"/>
<dbReference type="Pharos" id="P13473">
    <property type="development level" value="Tbio"/>
</dbReference>
<dbReference type="PRO" id="PR:P13473"/>
<dbReference type="Proteomes" id="UP000005640">
    <property type="component" value="Chromosome X"/>
</dbReference>
<dbReference type="RNAct" id="P13473">
    <property type="molecule type" value="protein"/>
</dbReference>
<dbReference type="Bgee" id="ENSG00000005893">
    <property type="expression patterns" value="Expressed in corpus callosum and 208 other cell types or tissues"/>
</dbReference>
<dbReference type="ExpressionAtlas" id="P13473">
    <property type="expression patterns" value="baseline and differential"/>
</dbReference>
<dbReference type="GO" id="GO:0044754">
    <property type="term" value="C:autolysosome"/>
    <property type="evidence" value="ECO:0000314"/>
    <property type="project" value="MGI"/>
</dbReference>
<dbReference type="GO" id="GO:0000421">
    <property type="term" value="C:autophagosome membrane"/>
    <property type="evidence" value="ECO:0000318"/>
    <property type="project" value="GO_Central"/>
</dbReference>
<dbReference type="GO" id="GO:0035577">
    <property type="term" value="C:azurophil granule membrane"/>
    <property type="evidence" value="ECO:0000304"/>
    <property type="project" value="Reactome"/>
</dbReference>
<dbReference type="GO" id="GO:0061742">
    <property type="term" value="C:chaperone-mediated autophagy translocation complex"/>
    <property type="evidence" value="ECO:0000315"/>
    <property type="project" value="ParkinsonsUK-UCL"/>
</dbReference>
<dbReference type="GO" id="GO:0070062">
    <property type="term" value="C:extracellular exosome"/>
    <property type="evidence" value="ECO:0000314"/>
    <property type="project" value="UniProtKB"/>
</dbReference>
<dbReference type="GO" id="GO:0005615">
    <property type="term" value="C:extracellular space"/>
    <property type="evidence" value="ECO:0000314"/>
    <property type="project" value="UniProtKB"/>
</dbReference>
<dbReference type="GO" id="GO:0101003">
    <property type="term" value="C:ficolin-1-rich granule membrane"/>
    <property type="evidence" value="ECO:0000304"/>
    <property type="project" value="Reactome"/>
</dbReference>
<dbReference type="GO" id="GO:0043231">
    <property type="term" value="C:intracellular membrane-bounded organelle"/>
    <property type="evidence" value="ECO:0000314"/>
    <property type="project" value="HPA"/>
</dbReference>
<dbReference type="GO" id="GO:0005770">
    <property type="term" value="C:late endosome"/>
    <property type="evidence" value="ECO:0000314"/>
    <property type="project" value="MGI"/>
</dbReference>
<dbReference type="GO" id="GO:0031902">
    <property type="term" value="C:late endosome membrane"/>
    <property type="evidence" value="ECO:0000314"/>
    <property type="project" value="MGI"/>
</dbReference>
<dbReference type="GO" id="GO:0043202">
    <property type="term" value="C:lysosomal lumen"/>
    <property type="evidence" value="ECO:0000304"/>
    <property type="project" value="ParkinsonsUK-UCL"/>
</dbReference>
<dbReference type="GO" id="GO:0005765">
    <property type="term" value="C:lysosomal membrane"/>
    <property type="evidence" value="ECO:0000314"/>
    <property type="project" value="UniProt"/>
</dbReference>
<dbReference type="GO" id="GO:0005764">
    <property type="term" value="C:lysosome"/>
    <property type="evidence" value="ECO:0000314"/>
    <property type="project" value="UniProtKB"/>
</dbReference>
<dbReference type="GO" id="GO:0016020">
    <property type="term" value="C:membrane"/>
    <property type="evidence" value="ECO:0000314"/>
    <property type="project" value="MGI"/>
</dbReference>
<dbReference type="GO" id="GO:0048471">
    <property type="term" value="C:perinuclear region of cytoplasm"/>
    <property type="evidence" value="ECO:0000315"/>
    <property type="project" value="ParkinsonsUK-UCL"/>
</dbReference>
<dbReference type="GO" id="GO:0030670">
    <property type="term" value="C:phagocytic vesicle membrane"/>
    <property type="evidence" value="ECO:0007669"/>
    <property type="project" value="Ensembl"/>
</dbReference>
<dbReference type="GO" id="GO:0005886">
    <property type="term" value="C:plasma membrane"/>
    <property type="evidence" value="ECO:0000318"/>
    <property type="project" value="GO_Central"/>
</dbReference>
<dbReference type="GO" id="GO:0031088">
    <property type="term" value="C:platelet dense granule membrane"/>
    <property type="evidence" value="ECO:0000314"/>
    <property type="project" value="MGI"/>
</dbReference>
<dbReference type="GO" id="GO:0005802">
    <property type="term" value="C:trans-Golgi network"/>
    <property type="evidence" value="ECO:0000315"/>
    <property type="project" value="ParkinsonsUK-UCL"/>
</dbReference>
<dbReference type="GO" id="GO:0019899">
    <property type="term" value="F:enzyme binding"/>
    <property type="evidence" value="ECO:0000353"/>
    <property type="project" value="UniProtKB"/>
</dbReference>
<dbReference type="GO" id="GO:0008200">
    <property type="term" value="F:ion channel inhibitor activity"/>
    <property type="evidence" value="ECO:0000314"/>
    <property type="project" value="UniProtKB"/>
</dbReference>
<dbReference type="GO" id="GO:0019904">
    <property type="term" value="F:protein domain specific binding"/>
    <property type="evidence" value="ECO:0007669"/>
    <property type="project" value="Ensembl"/>
</dbReference>
<dbReference type="GO" id="GO:0035591">
    <property type="term" value="F:signaling adaptor activity"/>
    <property type="evidence" value="ECO:0000314"/>
    <property type="project" value="UniProt"/>
</dbReference>
<dbReference type="GO" id="GO:0097352">
    <property type="term" value="P:autophagosome maturation"/>
    <property type="evidence" value="ECO:0000250"/>
    <property type="project" value="UniProtKB"/>
</dbReference>
<dbReference type="GO" id="GO:0009267">
    <property type="term" value="P:cellular response to starvation"/>
    <property type="evidence" value="ECO:0000250"/>
    <property type="project" value="UniProtKB"/>
</dbReference>
<dbReference type="GO" id="GO:0061684">
    <property type="term" value="P:chaperone-mediated autophagy"/>
    <property type="evidence" value="ECO:0000314"/>
    <property type="project" value="UniProt"/>
</dbReference>
<dbReference type="GO" id="GO:0007042">
    <property type="term" value="P:lysosomal lumen acidification"/>
    <property type="evidence" value="ECO:0000314"/>
    <property type="project" value="UniProtKB"/>
</dbReference>
<dbReference type="GO" id="GO:1905146">
    <property type="term" value="P:lysosomal protein catabolic process"/>
    <property type="evidence" value="ECO:0000315"/>
    <property type="project" value="UniProtKB"/>
</dbReference>
<dbReference type="GO" id="GO:0046716">
    <property type="term" value="P:muscle cell cellular homeostasis"/>
    <property type="evidence" value="ECO:0007669"/>
    <property type="project" value="Ensembl"/>
</dbReference>
<dbReference type="GO" id="GO:1900226">
    <property type="term" value="P:negative regulation of NLRP3 inflammasome complex assembly"/>
    <property type="evidence" value="ECO:0000314"/>
    <property type="project" value="UniProt"/>
</dbReference>
<dbReference type="GO" id="GO:0031333">
    <property type="term" value="P:negative regulation of protein-containing complex assembly"/>
    <property type="evidence" value="ECO:0000314"/>
    <property type="project" value="ParkinsonsUK-UCL"/>
</dbReference>
<dbReference type="GO" id="GO:0030163">
    <property type="term" value="P:protein catabolic process"/>
    <property type="evidence" value="ECO:0000314"/>
    <property type="project" value="UniProt"/>
</dbReference>
<dbReference type="GO" id="GO:0017038">
    <property type="term" value="P:protein import"/>
    <property type="evidence" value="ECO:0000304"/>
    <property type="project" value="ParkinsonsUK-UCL"/>
</dbReference>
<dbReference type="GO" id="GO:0050821">
    <property type="term" value="P:protein stabilization"/>
    <property type="evidence" value="ECO:0000250"/>
    <property type="project" value="CAFA"/>
</dbReference>
<dbReference type="GO" id="GO:0006605">
    <property type="term" value="P:protein targeting"/>
    <property type="evidence" value="ECO:0000250"/>
    <property type="project" value="UniProtKB"/>
</dbReference>
<dbReference type="GO" id="GO:0061740">
    <property type="term" value="P:protein targeting to lysosome involved in chaperone-mediated autophagy"/>
    <property type="evidence" value="ECO:0000315"/>
    <property type="project" value="UniProtKB"/>
</dbReference>
<dbReference type="GO" id="GO:0031647">
    <property type="term" value="P:regulation of protein stability"/>
    <property type="evidence" value="ECO:0000315"/>
    <property type="project" value="ParkinsonsUK-UCL"/>
</dbReference>
<dbReference type="FunFam" id="2.40.160.110:FF:000004">
    <property type="entry name" value="Lysosomal associated membrane protein 2"/>
    <property type="match status" value="1"/>
</dbReference>
<dbReference type="FunFam" id="2.40.160.110:FF:000001">
    <property type="entry name" value="lysosome-associated membrane glycoprotein 2 isoform X2"/>
    <property type="match status" value="1"/>
</dbReference>
<dbReference type="Gene3D" id="2.40.160.110">
    <property type="match status" value="2"/>
</dbReference>
<dbReference type="InterPro" id="IPR048528">
    <property type="entry name" value="Lamp2-like_luminal"/>
</dbReference>
<dbReference type="InterPro" id="IPR048524">
    <property type="entry name" value="Lamp2-like_TM"/>
</dbReference>
<dbReference type="InterPro" id="IPR018134">
    <property type="entry name" value="LAMP_CS"/>
</dbReference>
<dbReference type="InterPro" id="IPR002000">
    <property type="entry name" value="Lysosome-assoc_membr_glycop"/>
</dbReference>
<dbReference type="PANTHER" id="PTHR11506">
    <property type="entry name" value="LYSOSOME-ASSOCIATED MEMBRANE GLYCOPROTEIN"/>
    <property type="match status" value="1"/>
</dbReference>
<dbReference type="PANTHER" id="PTHR11506:SF6">
    <property type="entry name" value="LYSOSOME-ASSOCIATED MEMBRANE GLYCOPROTEIN 2"/>
    <property type="match status" value="1"/>
</dbReference>
<dbReference type="Pfam" id="PF01299">
    <property type="entry name" value="Lamp2-like_luminal"/>
    <property type="match status" value="1"/>
</dbReference>
<dbReference type="Pfam" id="PF21222">
    <property type="entry name" value="Lamp2_2nd"/>
    <property type="match status" value="1"/>
</dbReference>
<dbReference type="PRINTS" id="PR00336">
    <property type="entry name" value="LYSASSOCTDMP"/>
</dbReference>
<dbReference type="PROSITE" id="PS00310">
    <property type="entry name" value="LAMP_1"/>
    <property type="match status" value="1"/>
</dbReference>
<dbReference type="PROSITE" id="PS00311">
    <property type="entry name" value="LAMP_2"/>
    <property type="match status" value="1"/>
</dbReference>
<dbReference type="PROSITE" id="PS51407">
    <property type="entry name" value="LAMP_3"/>
    <property type="match status" value="1"/>
</dbReference>
<protein>
    <recommendedName>
        <fullName evidence="33">Lysosome-associated membrane glycoprotein 2</fullName>
        <shortName evidence="33">LAMP-2</shortName>
        <shortName>Lysosome-associated membrane protein 2</shortName>
    </recommendedName>
    <alternativeName>
        <fullName>CD107 antigen-like family member B</fullName>
    </alternativeName>
    <alternativeName>
        <fullName evidence="36">LGP-96</fullName>
    </alternativeName>
    <cdAntigenName>CD107b</cdAntigenName>
</protein>
<feature type="signal peptide" evidence="8 23 24">
    <location>
        <begin position="1"/>
        <end position="28"/>
    </location>
</feature>
<feature type="chain" id="PRO_0000017110" description="Lysosome-associated membrane glycoprotein 2">
    <location>
        <begin position="29"/>
        <end position="410"/>
    </location>
</feature>
<feature type="topological domain" description="Lumenal" evidence="3">
    <location>
        <begin position="29"/>
        <end position="375"/>
    </location>
</feature>
<feature type="transmembrane region" description="Helical" evidence="4">
    <location>
        <begin position="376"/>
        <end position="399"/>
    </location>
</feature>
<feature type="topological domain" description="Cytoplasmic" evidence="4">
    <location>
        <begin position="400"/>
        <end position="410"/>
    </location>
</feature>
<feature type="region of interest" description="First lumenal domain">
    <location>
        <begin position="29"/>
        <end position="192"/>
    </location>
</feature>
<feature type="region of interest" description="Hinge">
    <location>
        <begin position="193"/>
        <end position="228"/>
    </location>
</feature>
<feature type="region of interest" description="Disordered" evidence="5">
    <location>
        <begin position="199"/>
        <end position="221"/>
    </location>
</feature>
<feature type="region of interest" description="Second lumenal domain">
    <location>
        <begin position="229"/>
        <end position="375"/>
    </location>
</feature>
<feature type="region of interest" description="Important for binding and subsequent lysosomal degradation of target proteins" evidence="6">
    <location>
        <begin position="401"/>
        <end position="404"/>
    </location>
</feature>
<feature type="compositionally biased region" description="Low complexity" evidence="5">
    <location>
        <begin position="199"/>
        <end position="213"/>
    </location>
</feature>
<feature type="glycosylation site" description="N-linked (GlcNAc...) (polylactosaminoglycan) asparagine" evidence="12">
    <location>
        <position position="32"/>
    </location>
</feature>
<feature type="glycosylation site" description="N-linked (GlcNAc...) (polylactosaminoglycan) asparagine" evidence="12">
    <location>
        <position position="38"/>
    </location>
</feature>
<feature type="glycosylation site" description="N-linked (GlcNAc...) asparagine" evidence="7 12">
    <location>
        <position position="49"/>
    </location>
</feature>
<feature type="glycosylation site" description="N-linked (GlcNAc...) asparagine" evidence="30">
    <location>
        <position position="58"/>
    </location>
</feature>
<feature type="glycosylation site" description="N-linked (GlcNAc...) asparagine" evidence="30">
    <location>
        <position position="75"/>
    </location>
</feature>
<feature type="glycosylation site" description="N-linked (GlcNAc...) asparagine" evidence="7 12 15">
    <location>
        <position position="101"/>
    </location>
</feature>
<feature type="glycosylation site" description="N-linked (GlcNAc...) asparagine" evidence="12 15">
    <location>
        <position position="123"/>
    </location>
</feature>
<feature type="glycosylation site" description="N-linked (GlcNAc...) asparagine" evidence="30">
    <location>
        <position position="179"/>
    </location>
</feature>
<feature type="glycosylation site" description="O-linked (GalNAc...) serine" evidence="30">
    <location>
        <position position="195"/>
    </location>
</feature>
<feature type="glycosylation site" description="O-linked (GalNAc...) threonine" evidence="30">
    <location>
        <position position="196"/>
    </location>
</feature>
<feature type="glycosylation site" description="O-linked (GalNAc...) threonine" evidence="30">
    <location>
        <position position="200"/>
    </location>
</feature>
<feature type="glycosylation site" description="O-linked (GalNAc...) threonine" evidence="30">
    <location>
        <position position="203"/>
    </location>
</feature>
<feature type="glycosylation site" description="O-linked (GalNAc...) threonine" evidence="30">
    <location>
        <position position="204"/>
    </location>
</feature>
<feature type="glycosylation site" description="O-linked (GalNAc...) serine; partial" evidence="30">
    <location>
        <position position="207"/>
    </location>
</feature>
<feature type="glycosylation site" description="O-linked (GalNAc...) threonine; partial" evidence="30">
    <location>
        <position position="209"/>
    </location>
</feature>
<feature type="glycosylation site" description="O-linked (GalNAc...) threonine" evidence="30">
    <location>
        <position position="210"/>
    </location>
</feature>
<feature type="glycosylation site" description="O-linked (GalNAc...) threonine" evidence="30">
    <location>
        <position position="211"/>
    </location>
</feature>
<feature type="glycosylation site" description="O-linked (GalNAc...) threonine; partial" evidence="30">
    <location>
        <position position="213"/>
    </location>
</feature>
<feature type="glycosylation site" description="N-linked (GlcNAc...) asparagine" evidence="30">
    <location>
        <position position="229"/>
    </location>
</feature>
<feature type="glycosylation site" description="N-linked (GlcNAc...) asparagine" evidence="30">
    <location>
        <position position="242"/>
    </location>
</feature>
<feature type="glycosylation site" description="N-linked (GlcNAc...) asparagine" evidence="12 15">
    <location>
        <position position="257"/>
    </location>
</feature>
<feature type="glycosylation site" description="N-linked (GlcNAc...) asparagine" evidence="30">
    <location>
        <position position="275"/>
    </location>
</feature>
<feature type="glycosylation site" description="N-linked (GlcNAc...) asparagine" evidence="30">
    <location>
        <position position="300"/>
    </location>
</feature>
<feature type="glycosylation site" description="N-linked (GlcNAc...) (polylactosaminoglycan) asparagine" evidence="30">
    <location>
        <position position="307"/>
    </location>
</feature>
<feature type="glycosylation site" description="N-linked (GlcNAc...) asparagine" evidence="30">
    <location>
        <position position="317"/>
    </location>
</feature>
<feature type="glycosylation site" description="N-linked (GlcNAc...) asparagine" evidence="15">
    <location>
        <position position="356"/>
    </location>
</feature>
<feature type="disulfide bond" evidence="4">
    <location>
        <begin position="41"/>
        <end position="79"/>
    </location>
</feature>
<feature type="disulfide bond" evidence="4">
    <location>
        <begin position="153"/>
        <end position="189"/>
    </location>
</feature>
<feature type="disulfide bond" evidence="4">
    <location>
        <begin position="232"/>
        <end position="265"/>
    </location>
</feature>
<feature type="disulfide bond" evidence="4">
    <location>
        <begin position="331"/>
        <end position="368"/>
    </location>
</feature>
<feature type="splice variant" id="VSP_042519" description="In isoform LAMP-2C." evidence="37">
    <original>QDCSADDDNFLVPIAVGAALAGVLILVLLAYFIGLKHHHAGYEQF</original>
    <variation>EECSADSDLNFLIPVAVGVALGFLIIVVFISYMIGRRKSRTGYQSV</variation>
    <location>
        <begin position="366"/>
        <end position="410"/>
    </location>
</feature>
<feature type="splice variant" id="VSP_003044" description="In isoform LAMP-2B." evidence="32 34 35">
    <original>DCSADDDNFLVPIAVGAALAGVLILVLLAYFIGLKHHHAGYEQF</original>
    <variation>ECSLDDDTILIPIIVGAGLSGLIIVIVIAYVIGRRKSYAGYQTL</variation>
    <location>
        <begin position="367"/>
        <end position="410"/>
    </location>
</feature>
<feature type="sequence variant" id="VAR_011992" description="In dbSNP:rs1043878.">
    <original>P</original>
    <variation>H</variation>
    <location>
        <position position="256"/>
    </location>
</feature>
<feature type="sequence variant" id="VAR_026230" description="In DAND; dbSNP:rs104894859." evidence="9 11">
    <original>W</original>
    <variation>R</variation>
    <location>
        <position position="321"/>
    </location>
</feature>
<feature type="mutagenesis site" description="Impairs binding and subsequent lysosomal degradation of target proteins, such as GAPDH." evidence="6">
    <original>KHHH</original>
    <variation>AAAA</variation>
    <location>
        <begin position="401"/>
        <end position="404"/>
    </location>
</feature>
<feature type="sequence conflict" description="In Ref. 3; no nucleotide entry." evidence="38" ref="3">
    <original>PVPGSG</original>
    <variation>RFRSGLR</variation>
    <location>
        <begin position="8"/>
        <end position="13"/>
    </location>
</feature>
<feature type="sequence conflict" description="In Ref. 3; no nucleotide entry." evidence="38" ref="3">
    <original>R</original>
    <variation>G</variation>
    <location>
        <position position="53"/>
    </location>
</feature>
<feature type="sequence conflict" description="In Ref. 2; AAB41647." evidence="38" ref="2">
    <original>D</original>
    <variation>V</variation>
    <location>
        <position position="68"/>
    </location>
</feature>
<feature type="sequence conflict" description="In Ref. 2; AAB41647." evidence="38" ref="2">
    <original>I</original>
    <variation>N</variation>
    <location>
        <position position="111"/>
    </location>
</feature>
<feature type="sequence conflict" description="In Ref. 2; AAB41647." evidence="38" ref="2">
    <original>I</original>
    <variation>Y</variation>
    <location>
        <position position="143"/>
    </location>
</feature>
<feature type="sequence conflict" description="In Ref. 2; AAB41647." evidence="38" ref="2">
    <original>A</original>
    <variation>P</variation>
    <location>
        <position position="220"/>
    </location>
</feature>
<feature type="sequence conflict" description="In Ref. 2; AAB41647." evidence="38" ref="2">
    <original>L</original>
    <variation>R</variation>
    <location>
        <position position="234"/>
    </location>
</feature>
<feature type="sequence conflict" description="In Ref. 3; no nucleotide entry." evidence="38" ref="3">
    <original>GSCRSHT</original>
    <variation>AAAVSH</variation>
    <location>
        <begin position="263"/>
        <end position="269"/>
    </location>
</feature>
<feature type="sequence conflict" description="In Ref. 1; AAA60383." evidence="38" ref="1">
    <original>DAPLG</original>
    <variation>MPP</variation>
    <location>
        <begin position="322"/>
        <end position="326"/>
    </location>
</feature>
<feature type="strand" evidence="39">
    <location>
        <begin position="374"/>
        <end position="377"/>
    </location>
</feature>
<feature type="helix" evidence="39">
    <location>
        <begin position="380"/>
        <end position="400"/>
    </location>
</feature>
<accession>P13473</accession>
<accession>A8K4X5</accession>
<accession>D3DTF0</accession>
<accession>Q16641</accession>
<accession>Q6Q3G8</accession>
<accession>Q96J30</accession>
<accession>Q99534</accession>
<accession>Q9UD93</accession>
<reference key="1">
    <citation type="journal article" date="1988" name="J. Biol. Chem.">
        <title>Cloning of cDNAs encoding human lysosomal membrane glycoproteins, h-lamp-1 and h-lamp-2. Comparison of their deduced amino acid sequences.</title>
        <authorList>
            <person name="Fukuda M."/>
            <person name="Viitala J."/>
            <person name="Matteson J."/>
            <person name="Carlsson S.R."/>
        </authorList>
    </citation>
    <scope>NUCLEOTIDE SEQUENCE [MRNA] (ISOFORM LAMP-2A)</scope>
    <scope>PROTEIN SEQUENCE OF 29-64; 216-223 AND 238-256</scope>
</reference>
<reference key="2">
    <citation type="journal article" date="1993" name="J. Biol. Chem.">
        <title>The genes of major lysosomal membrane glycoproteins, lamp-1 and lamp-2. 5'-flanking sequence of lamp-2 gene and comparison of exon organization in two genes.</title>
        <authorList>
            <person name="Sawada R."/>
            <person name="Jardine K.A."/>
            <person name="Fukuda M."/>
        </authorList>
    </citation>
    <scope>NUCLEOTIDE SEQUENCE [GENOMIC DNA] (ISOFORM LAMP-2A)</scope>
    <source>
        <tissue>Placenta</tissue>
    </source>
</reference>
<reference key="3">
    <citation type="journal article" date="1993" name="J. Biol. Chem.">
        <title>Molecular and cellular characterization of Mex-/methylation-resistant phenotype. Gene and cDNA cloning, serum dependence, and tumor suppression of transfectant strains.</title>
        <authorList>
            <person name="Fritz G."/>
            <person name="Dosch J."/>
            <person name="Thielmann H.W."/>
            <person name="Kaina B."/>
        </authorList>
    </citation>
    <scope>NUCLEOTIDE SEQUENCE [MRNA] (ISOFORM LAMP-2B)</scope>
    <source>
        <tissue>Fibroblast</tissue>
    </source>
</reference>
<reference key="4">
    <citation type="journal article" date="1994" name="Biochem. Biophys. Res. Commun.">
        <title>Complete cDNA sequence of human lysosome-associated membrane protein-2.</title>
        <authorList>
            <person name="Konecki D.S."/>
            <person name="Foetisch K."/>
            <person name="Schlotter M."/>
            <person name="Lichter-Konecki U."/>
        </authorList>
    </citation>
    <scope>NUCLEOTIDE SEQUENCE [MRNA] (ISOFORM LAMP-2A)</scope>
    <source>
        <tissue>Liver</tissue>
    </source>
</reference>
<reference key="5">
    <citation type="journal article" date="1995" name="Biochem. Biophys. Res. Commun.">
        <title>An alternatively spliced form of the human lysosome-associated membrane protein-2 gene is expressed in a tissue-specific manner.</title>
        <authorList>
            <person name="Konecki D.S."/>
            <person name="Foetisch K."/>
            <person name="Zimmer K.P."/>
            <person name="Schlotter M."/>
            <person name="Lichter-Konecki U."/>
        </authorList>
    </citation>
    <scope>NUCLEOTIDE SEQUENCE [MRNA] (ISOFORM LAMP-2B)</scope>
    <scope>TISSUE SPECIFICITY</scope>
</reference>
<reference key="6">
    <citation type="submission" date="2004-02" db="EMBL/GenBank/DDBJ databases">
        <title>Lamp-2 isoforms play different roles in lysosomal biogenesis.</title>
        <authorList>
            <person name="Zhou D."/>
            <person name="Blum J.S."/>
        </authorList>
    </citation>
    <scope>NUCLEOTIDE SEQUENCE [MRNA] (ISOFORM LAMP-2C)</scope>
</reference>
<reference key="7">
    <citation type="journal article" date="2004" name="Nat. Genet.">
        <title>Complete sequencing and characterization of 21,243 full-length human cDNAs.</title>
        <authorList>
            <person name="Ota T."/>
            <person name="Suzuki Y."/>
            <person name="Nishikawa T."/>
            <person name="Otsuki T."/>
            <person name="Sugiyama T."/>
            <person name="Irie R."/>
            <person name="Wakamatsu A."/>
            <person name="Hayashi K."/>
            <person name="Sato H."/>
            <person name="Nagai K."/>
            <person name="Kimura K."/>
            <person name="Makita H."/>
            <person name="Sekine M."/>
            <person name="Obayashi M."/>
            <person name="Nishi T."/>
            <person name="Shibahara T."/>
            <person name="Tanaka T."/>
            <person name="Ishii S."/>
            <person name="Yamamoto J."/>
            <person name="Saito K."/>
            <person name="Kawai Y."/>
            <person name="Isono Y."/>
            <person name="Nakamura Y."/>
            <person name="Nagahari K."/>
            <person name="Murakami K."/>
            <person name="Yasuda T."/>
            <person name="Iwayanagi T."/>
            <person name="Wagatsuma M."/>
            <person name="Shiratori A."/>
            <person name="Sudo H."/>
            <person name="Hosoiri T."/>
            <person name="Kaku Y."/>
            <person name="Kodaira H."/>
            <person name="Kondo H."/>
            <person name="Sugawara M."/>
            <person name="Takahashi M."/>
            <person name="Kanda K."/>
            <person name="Yokoi T."/>
            <person name="Furuya T."/>
            <person name="Kikkawa E."/>
            <person name="Omura Y."/>
            <person name="Abe K."/>
            <person name="Kamihara K."/>
            <person name="Katsuta N."/>
            <person name="Sato K."/>
            <person name="Tanikawa M."/>
            <person name="Yamazaki M."/>
            <person name="Ninomiya K."/>
            <person name="Ishibashi T."/>
            <person name="Yamashita H."/>
            <person name="Murakawa K."/>
            <person name="Fujimori K."/>
            <person name="Tanai H."/>
            <person name="Kimata M."/>
            <person name="Watanabe M."/>
            <person name="Hiraoka S."/>
            <person name="Chiba Y."/>
            <person name="Ishida S."/>
            <person name="Ono Y."/>
            <person name="Takiguchi S."/>
            <person name="Watanabe S."/>
            <person name="Yosida M."/>
            <person name="Hotuta T."/>
            <person name="Kusano J."/>
            <person name="Kanehori K."/>
            <person name="Takahashi-Fujii A."/>
            <person name="Hara H."/>
            <person name="Tanase T.-O."/>
            <person name="Nomura Y."/>
            <person name="Togiya S."/>
            <person name="Komai F."/>
            <person name="Hara R."/>
            <person name="Takeuchi K."/>
            <person name="Arita M."/>
            <person name="Imose N."/>
            <person name="Musashino K."/>
            <person name="Yuuki H."/>
            <person name="Oshima A."/>
            <person name="Sasaki N."/>
            <person name="Aotsuka S."/>
            <person name="Yoshikawa Y."/>
            <person name="Matsunawa H."/>
            <person name="Ichihara T."/>
            <person name="Shiohata N."/>
            <person name="Sano S."/>
            <person name="Moriya S."/>
            <person name="Momiyama H."/>
            <person name="Satoh N."/>
            <person name="Takami S."/>
            <person name="Terashima Y."/>
            <person name="Suzuki O."/>
            <person name="Nakagawa S."/>
            <person name="Senoh A."/>
            <person name="Mizoguchi H."/>
            <person name="Goto Y."/>
            <person name="Shimizu F."/>
            <person name="Wakebe H."/>
            <person name="Hishigaki H."/>
            <person name="Watanabe T."/>
            <person name="Sugiyama A."/>
            <person name="Takemoto M."/>
            <person name="Kawakami B."/>
            <person name="Yamazaki M."/>
            <person name="Watanabe K."/>
            <person name="Kumagai A."/>
            <person name="Itakura S."/>
            <person name="Fukuzumi Y."/>
            <person name="Fujimori Y."/>
            <person name="Komiyama M."/>
            <person name="Tashiro H."/>
            <person name="Tanigami A."/>
            <person name="Fujiwara T."/>
            <person name="Ono T."/>
            <person name="Yamada K."/>
            <person name="Fujii Y."/>
            <person name="Ozaki K."/>
            <person name="Hirao M."/>
            <person name="Ohmori Y."/>
            <person name="Kawabata A."/>
            <person name="Hikiji T."/>
            <person name="Kobatake N."/>
            <person name="Inagaki H."/>
            <person name="Ikema Y."/>
            <person name="Okamoto S."/>
            <person name="Okitani R."/>
            <person name="Kawakami T."/>
            <person name="Noguchi S."/>
            <person name="Itoh T."/>
            <person name="Shigeta K."/>
            <person name="Senba T."/>
            <person name="Matsumura K."/>
            <person name="Nakajima Y."/>
            <person name="Mizuno T."/>
            <person name="Morinaga M."/>
            <person name="Sasaki M."/>
            <person name="Togashi T."/>
            <person name="Oyama M."/>
            <person name="Hata H."/>
            <person name="Watanabe M."/>
            <person name="Komatsu T."/>
            <person name="Mizushima-Sugano J."/>
            <person name="Satoh T."/>
            <person name="Shirai Y."/>
            <person name="Takahashi Y."/>
            <person name="Nakagawa K."/>
            <person name="Okumura K."/>
            <person name="Nagase T."/>
            <person name="Nomura N."/>
            <person name="Kikuchi H."/>
            <person name="Masuho Y."/>
            <person name="Yamashita R."/>
            <person name="Nakai K."/>
            <person name="Yada T."/>
            <person name="Nakamura Y."/>
            <person name="Ohara O."/>
            <person name="Isogai T."/>
            <person name="Sugano S."/>
        </authorList>
    </citation>
    <scope>NUCLEOTIDE SEQUENCE [LARGE SCALE MRNA] (ISOFORM LAMP-2A)</scope>
</reference>
<reference key="8">
    <citation type="journal article" date="2005" name="Nature">
        <title>The DNA sequence of the human X chromosome.</title>
        <authorList>
            <person name="Ross M.T."/>
            <person name="Grafham D.V."/>
            <person name="Coffey A.J."/>
            <person name="Scherer S."/>
            <person name="McLay K."/>
            <person name="Muzny D."/>
            <person name="Platzer M."/>
            <person name="Howell G.R."/>
            <person name="Burrows C."/>
            <person name="Bird C.P."/>
            <person name="Frankish A."/>
            <person name="Lovell F.L."/>
            <person name="Howe K.L."/>
            <person name="Ashurst J.L."/>
            <person name="Fulton R.S."/>
            <person name="Sudbrak R."/>
            <person name="Wen G."/>
            <person name="Jones M.C."/>
            <person name="Hurles M.E."/>
            <person name="Andrews T.D."/>
            <person name="Scott C.E."/>
            <person name="Searle S."/>
            <person name="Ramser J."/>
            <person name="Whittaker A."/>
            <person name="Deadman R."/>
            <person name="Carter N.P."/>
            <person name="Hunt S.E."/>
            <person name="Chen R."/>
            <person name="Cree A."/>
            <person name="Gunaratne P."/>
            <person name="Havlak P."/>
            <person name="Hodgson A."/>
            <person name="Metzker M.L."/>
            <person name="Richards S."/>
            <person name="Scott G."/>
            <person name="Steffen D."/>
            <person name="Sodergren E."/>
            <person name="Wheeler D.A."/>
            <person name="Worley K.C."/>
            <person name="Ainscough R."/>
            <person name="Ambrose K.D."/>
            <person name="Ansari-Lari M.A."/>
            <person name="Aradhya S."/>
            <person name="Ashwell R.I."/>
            <person name="Babbage A.K."/>
            <person name="Bagguley C.L."/>
            <person name="Ballabio A."/>
            <person name="Banerjee R."/>
            <person name="Barker G.E."/>
            <person name="Barlow K.F."/>
            <person name="Barrett I.P."/>
            <person name="Bates K.N."/>
            <person name="Beare D.M."/>
            <person name="Beasley H."/>
            <person name="Beasley O."/>
            <person name="Beck A."/>
            <person name="Bethel G."/>
            <person name="Blechschmidt K."/>
            <person name="Brady N."/>
            <person name="Bray-Allen S."/>
            <person name="Bridgeman A.M."/>
            <person name="Brown A.J."/>
            <person name="Brown M.J."/>
            <person name="Bonnin D."/>
            <person name="Bruford E.A."/>
            <person name="Buhay C."/>
            <person name="Burch P."/>
            <person name="Burford D."/>
            <person name="Burgess J."/>
            <person name="Burrill W."/>
            <person name="Burton J."/>
            <person name="Bye J.M."/>
            <person name="Carder C."/>
            <person name="Carrel L."/>
            <person name="Chako J."/>
            <person name="Chapman J.C."/>
            <person name="Chavez D."/>
            <person name="Chen E."/>
            <person name="Chen G."/>
            <person name="Chen Y."/>
            <person name="Chen Z."/>
            <person name="Chinault C."/>
            <person name="Ciccodicola A."/>
            <person name="Clark S.Y."/>
            <person name="Clarke G."/>
            <person name="Clee C.M."/>
            <person name="Clegg S."/>
            <person name="Clerc-Blankenburg K."/>
            <person name="Clifford K."/>
            <person name="Cobley V."/>
            <person name="Cole C.G."/>
            <person name="Conquer J.S."/>
            <person name="Corby N."/>
            <person name="Connor R.E."/>
            <person name="David R."/>
            <person name="Davies J."/>
            <person name="Davis C."/>
            <person name="Davis J."/>
            <person name="Delgado O."/>
            <person name="Deshazo D."/>
            <person name="Dhami P."/>
            <person name="Ding Y."/>
            <person name="Dinh H."/>
            <person name="Dodsworth S."/>
            <person name="Draper H."/>
            <person name="Dugan-Rocha S."/>
            <person name="Dunham A."/>
            <person name="Dunn M."/>
            <person name="Durbin K.J."/>
            <person name="Dutta I."/>
            <person name="Eades T."/>
            <person name="Ellwood M."/>
            <person name="Emery-Cohen A."/>
            <person name="Errington H."/>
            <person name="Evans K.L."/>
            <person name="Faulkner L."/>
            <person name="Francis F."/>
            <person name="Frankland J."/>
            <person name="Fraser A.E."/>
            <person name="Galgoczy P."/>
            <person name="Gilbert J."/>
            <person name="Gill R."/>
            <person name="Gloeckner G."/>
            <person name="Gregory S.G."/>
            <person name="Gribble S."/>
            <person name="Griffiths C."/>
            <person name="Grocock R."/>
            <person name="Gu Y."/>
            <person name="Gwilliam R."/>
            <person name="Hamilton C."/>
            <person name="Hart E.A."/>
            <person name="Hawes A."/>
            <person name="Heath P.D."/>
            <person name="Heitmann K."/>
            <person name="Hennig S."/>
            <person name="Hernandez J."/>
            <person name="Hinzmann B."/>
            <person name="Ho S."/>
            <person name="Hoffs M."/>
            <person name="Howden P.J."/>
            <person name="Huckle E.J."/>
            <person name="Hume J."/>
            <person name="Hunt P.J."/>
            <person name="Hunt A.R."/>
            <person name="Isherwood J."/>
            <person name="Jacob L."/>
            <person name="Johnson D."/>
            <person name="Jones S."/>
            <person name="de Jong P.J."/>
            <person name="Joseph S.S."/>
            <person name="Keenan S."/>
            <person name="Kelly S."/>
            <person name="Kershaw J.K."/>
            <person name="Khan Z."/>
            <person name="Kioschis P."/>
            <person name="Klages S."/>
            <person name="Knights A.J."/>
            <person name="Kosiura A."/>
            <person name="Kovar-Smith C."/>
            <person name="Laird G.K."/>
            <person name="Langford C."/>
            <person name="Lawlor S."/>
            <person name="Leversha M."/>
            <person name="Lewis L."/>
            <person name="Liu W."/>
            <person name="Lloyd C."/>
            <person name="Lloyd D.M."/>
            <person name="Loulseged H."/>
            <person name="Loveland J.E."/>
            <person name="Lovell J.D."/>
            <person name="Lozado R."/>
            <person name="Lu J."/>
            <person name="Lyne R."/>
            <person name="Ma J."/>
            <person name="Maheshwari M."/>
            <person name="Matthews L.H."/>
            <person name="McDowall J."/>
            <person name="McLaren S."/>
            <person name="McMurray A."/>
            <person name="Meidl P."/>
            <person name="Meitinger T."/>
            <person name="Milne S."/>
            <person name="Miner G."/>
            <person name="Mistry S.L."/>
            <person name="Morgan M."/>
            <person name="Morris S."/>
            <person name="Mueller I."/>
            <person name="Mullikin J.C."/>
            <person name="Nguyen N."/>
            <person name="Nordsiek G."/>
            <person name="Nyakatura G."/>
            <person name="O'dell C.N."/>
            <person name="Okwuonu G."/>
            <person name="Palmer S."/>
            <person name="Pandian R."/>
            <person name="Parker D."/>
            <person name="Parrish J."/>
            <person name="Pasternak S."/>
            <person name="Patel D."/>
            <person name="Pearce A.V."/>
            <person name="Pearson D.M."/>
            <person name="Pelan S.E."/>
            <person name="Perez L."/>
            <person name="Porter K.M."/>
            <person name="Ramsey Y."/>
            <person name="Reichwald K."/>
            <person name="Rhodes S."/>
            <person name="Ridler K.A."/>
            <person name="Schlessinger D."/>
            <person name="Schueler M.G."/>
            <person name="Sehra H.K."/>
            <person name="Shaw-Smith C."/>
            <person name="Shen H."/>
            <person name="Sheridan E.M."/>
            <person name="Shownkeen R."/>
            <person name="Skuce C.D."/>
            <person name="Smith M.L."/>
            <person name="Sotheran E.C."/>
            <person name="Steingruber H.E."/>
            <person name="Steward C.A."/>
            <person name="Storey R."/>
            <person name="Swann R.M."/>
            <person name="Swarbreck D."/>
            <person name="Tabor P.E."/>
            <person name="Taudien S."/>
            <person name="Taylor T."/>
            <person name="Teague B."/>
            <person name="Thomas K."/>
            <person name="Thorpe A."/>
            <person name="Timms K."/>
            <person name="Tracey A."/>
            <person name="Trevanion S."/>
            <person name="Tromans A.C."/>
            <person name="d'Urso M."/>
            <person name="Verduzco D."/>
            <person name="Villasana D."/>
            <person name="Waldron L."/>
            <person name="Wall M."/>
            <person name="Wang Q."/>
            <person name="Warren J."/>
            <person name="Warry G.L."/>
            <person name="Wei X."/>
            <person name="West A."/>
            <person name="Whitehead S.L."/>
            <person name="Whiteley M.N."/>
            <person name="Wilkinson J.E."/>
            <person name="Willey D.L."/>
            <person name="Williams G."/>
            <person name="Williams L."/>
            <person name="Williamson A."/>
            <person name="Williamson H."/>
            <person name="Wilming L."/>
            <person name="Woodmansey R.L."/>
            <person name="Wray P.W."/>
            <person name="Yen J."/>
            <person name="Zhang J."/>
            <person name="Zhou J."/>
            <person name="Zoghbi H."/>
            <person name="Zorilla S."/>
            <person name="Buck D."/>
            <person name="Reinhardt R."/>
            <person name="Poustka A."/>
            <person name="Rosenthal A."/>
            <person name="Lehrach H."/>
            <person name="Meindl A."/>
            <person name="Minx P.J."/>
            <person name="Hillier L.W."/>
            <person name="Willard H.F."/>
            <person name="Wilson R.K."/>
            <person name="Waterston R.H."/>
            <person name="Rice C.M."/>
            <person name="Vaudin M."/>
            <person name="Coulson A."/>
            <person name="Nelson D.L."/>
            <person name="Weinstock G."/>
            <person name="Sulston J.E."/>
            <person name="Durbin R.M."/>
            <person name="Hubbard T."/>
            <person name="Gibbs R.A."/>
            <person name="Beck S."/>
            <person name="Rogers J."/>
            <person name="Bentley D.R."/>
        </authorList>
    </citation>
    <scope>NUCLEOTIDE SEQUENCE [LARGE SCALE GENOMIC DNA]</scope>
</reference>
<reference key="9">
    <citation type="submission" date="2005-09" db="EMBL/GenBank/DDBJ databases">
        <authorList>
            <person name="Mural R.J."/>
            <person name="Istrail S."/>
            <person name="Sutton G.G."/>
            <person name="Florea L."/>
            <person name="Halpern A.L."/>
            <person name="Mobarry C.M."/>
            <person name="Lippert R."/>
            <person name="Walenz B."/>
            <person name="Shatkay H."/>
            <person name="Dew I."/>
            <person name="Miller J.R."/>
            <person name="Flanigan M.J."/>
            <person name="Edwards N.J."/>
            <person name="Bolanos R."/>
            <person name="Fasulo D."/>
            <person name="Halldorsson B.V."/>
            <person name="Hannenhalli S."/>
            <person name="Turner R."/>
            <person name="Yooseph S."/>
            <person name="Lu F."/>
            <person name="Nusskern D.R."/>
            <person name="Shue B.C."/>
            <person name="Zheng X.H."/>
            <person name="Zhong F."/>
            <person name="Delcher A.L."/>
            <person name="Huson D.H."/>
            <person name="Kravitz S.A."/>
            <person name="Mouchard L."/>
            <person name="Reinert K."/>
            <person name="Remington K.A."/>
            <person name="Clark A.G."/>
            <person name="Waterman M.S."/>
            <person name="Eichler E.E."/>
            <person name="Adams M.D."/>
            <person name="Hunkapiller M.W."/>
            <person name="Myers E.W."/>
            <person name="Venter J.C."/>
        </authorList>
    </citation>
    <scope>NUCLEOTIDE SEQUENCE [LARGE SCALE GENOMIC DNA]</scope>
</reference>
<reference key="10">
    <citation type="journal article" date="2004" name="Genome Res.">
        <title>The status, quality, and expansion of the NIH full-length cDNA project: the Mammalian Gene Collection (MGC).</title>
        <authorList>
            <consortium name="The MGC Project Team"/>
        </authorList>
    </citation>
    <scope>NUCLEOTIDE SEQUENCE [LARGE SCALE MRNA] (ISOFORM LAMP-2B)</scope>
    <source>
        <tissue>Lymph</tissue>
    </source>
</reference>
<reference key="11">
    <citation type="journal article" date="1989" name="Arch. Biochem. Biophys.">
        <title>Purification and characterization of human lysosomal membrane glycoproteins.</title>
        <authorList>
            <person name="Mane S.M."/>
            <person name="Marzella L."/>
            <person name="Bainton D.F."/>
            <person name="Holt V.K."/>
            <person name="Cha Y."/>
            <person name="Hildreth J.E.K."/>
            <person name="August J.T."/>
        </authorList>
    </citation>
    <scope>PROTEIN SEQUENCE OF 29-66</scope>
    <scope>GLYCOSYLATION</scope>
    <scope>SUBCELLULAR LOCATION</scope>
</reference>
<reference key="12">
    <citation type="journal article" date="2004" name="Protein Sci.">
        <title>Signal peptide prediction based on analysis of experimentally verified cleavage sites.</title>
        <authorList>
            <person name="Zhang Z."/>
            <person name="Henzel W.J."/>
        </authorList>
    </citation>
    <scope>PROTEIN SEQUENCE OF 29-43</scope>
</reference>
<reference key="13">
    <citation type="journal article" date="1990" name="J. Biol. Chem.">
        <title>The polylactosaminoglycans of human lysosomal membrane glycoproteins lamp-1 and lamp-2. Localization on the peptide backbones.</title>
        <authorList>
            <person name="Carlsson S.R."/>
            <person name="Fukuda M."/>
        </authorList>
    </citation>
    <scope>POLYLACTOSAMINOGLYCANS</scope>
    <scope>GLYCOSYLATION</scope>
</reference>
<reference key="14">
    <citation type="journal article" date="1993" name="Arch. Biochem. Biophys.">
        <title>Assignment of O-glycan attachment sites to the hinge-like regions of human lysosomal membrane glycoproteins lamp-1 and lamp-2.</title>
        <authorList>
            <person name="Carlsson S.R."/>
            <person name="Lycksell P.-O."/>
            <person name="Fukuda M."/>
        </authorList>
    </citation>
    <scope>GLYCOSYLATION AT ASN-32; ASN-38; ASN-49; ASN-58; ASN-75; ASN-101; ASN-123; ASN-179; SER-195; THR-196; THR-200; THR-203; THR-204; SER-207; THR-209; THR-210; THR-211; THR-213; ASN-229; ASN-242; ASN-275; ASN-300; ASN-307 AND ASN-317</scope>
    <scope>PROTEIN SEQUENCE OF 187-215</scope>
</reference>
<reference key="15">
    <citation type="journal article" date="1996" name="Science">
        <title>A receptor for the selective uptake and degradation of proteins by lysosomes.</title>
        <authorList>
            <person name="Cuervo A.M."/>
            <person name="Dice J.F."/>
        </authorList>
    </citation>
    <scope>FUNCTION</scope>
    <scope>SUBCELLULAR LOCATION</scope>
</reference>
<reference key="16">
    <citation type="journal article" date="2000" name="J. Cell Sci.">
        <title>Unique properties of lamp2a compared to other lamp2 isoforms.</title>
        <authorList>
            <person name="Cuervo A.M."/>
            <person name="Dice J.F."/>
        </authorList>
    </citation>
    <scope>FUNCTION (ISOFORM LAMP-2A)</scope>
    <scope>SUBCELLULAR LOCATION</scope>
    <scope>TOPOLOGY</scope>
    <scope>MUTAGENESIS OF 401-LYS--HIS-404</scope>
</reference>
<reference key="17">
    <citation type="journal article" date="2003" name="Nat. Biotechnol.">
        <title>Identification and quantification of N-linked glycoproteins using hydrazide chemistry, stable isotope labeling and mass spectrometry.</title>
        <authorList>
            <person name="Zhang H."/>
            <person name="Li X.-J."/>
            <person name="Martin D.B."/>
            <person name="Aebersold R."/>
        </authorList>
    </citation>
    <scope>GLYCOSYLATION AT ASN-49 AND ASN-101</scope>
</reference>
<reference key="18">
    <citation type="journal article" date="2005" name="Immunity">
        <title>Lamp-2a facilitates MHC class II presentation of cytoplasmic antigens.</title>
        <authorList>
            <person name="Zhou D."/>
            <person name="Li P."/>
            <person name="Lin Y."/>
            <person name="Lott J.M."/>
            <person name="Hislop A.D."/>
            <person name="Canaday D.H."/>
            <person name="Brutkiewicz R.R."/>
            <person name="Blum J.S."/>
        </authorList>
    </citation>
    <scope>FUNCTION</scope>
</reference>
<reference key="19">
    <citation type="journal article" date="2005" name="J. Proteome Res.">
        <title>Human plasma N-glycoproteome analysis by immunoaffinity subtraction, hydrazide chemistry, and mass spectrometry.</title>
        <authorList>
            <person name="Liu T."/>
            <person name="Qian W.-J."/>
            <person name="Gritsenko M.A."/>
            <person name="Camp D.G. II"/>
            <person name="Monroe M.E."/>
            <person name="Moore R.J."/>
            <person name="Smith R.D."/>
        </authorList>
    </citation>
    <scope>GLYCOSYLATION [LARGE SCALE ANALYSIS] AT ASN-32; ASN-38; ASN-49; ASN-101; ASN-123 AND ASN-257</scope>
    <source>
        <tissue>Plasma</tissue>
    </source>
</reference>
<reference key="20">
    <citation type="journal article" date="2005" name="Traffic">
        <title>Unifying nomenclature for the isoforms of the lysosomal membrane protein LAMP-2.</title>
        <authorList>
            <person name="Eskelinen E.L."/>
            <person name="Cuervo A.M."/>
            <person name="Taylor M.R."/>
            <person name="Nishino I."/>
            <person name="Blum J.S."/>
            <person name="Dice J.F."/>
            <person name="Sandoval I.V."/>
            <person name="Lippincott-Schwartz J."/>
            <person name="August J.T."/>
            <person name="Saftig P."/>
        </authorList>
    </citation>
    <scope>NOMENCLATURE</scope>
</reference>
<reference key="21">
    <citation type="journal article" date="2007" name="Traffic">
        <title>Integral and associated lysosomal membrane proteins.</title>
        <authorList>
            <person name="Schroeder B."/>
            <person name="Wrocklage C."/>
            <person name="Pan C."/>
            <person name="Jaeger R."/>
            <person name="Koesters B."/>
            <person name="Schaefer H."/>
            <person name="Elsaesser H.-P."/>
            <person name="Mann M."/>
            <person name="Hasilik A."/>
        </authorList>
    </citation>
    <scope>SUBCELLULAR LOCATION [LARGE SCALE ANALYSIS]</scope>
    <source>
        <tissue>Placenta</tissue>
    </source>
</reference>
<reference key="22">
    <citation type="journal article" date="2008" name="Mol. Cell. Biol.">
        <title>The chaperone-mediated autophagy receptor organizes in dynamic protein complexes at the lysosomal membrane.</title>
        <authorList>
            <person name="Bandyopadhyay U."/>
            <person name="Kaushik S."/>
            <person name="Varticovski L."/>
            <person name="Cuervo A.M."/>
        </authorList>
    </citation>
    <scope>FUNCTION</scope>
    <scope>SUBCELLULAR LOCATION</scope>
    <scope>SUBUNIT</scope>
</reference>
<reference key="23">
    <citation type="journal article" date="2009" name="J. Proteome Res.">
        <title>Glycoproteomics analysis of human liver tissue by combination of multiple enzyme digestion and hydrazide chemistry.</title>
        <authorList>
            <person name="Chen R."/>
            <person name="Jiang X."/>
            <person name="Sun D."/>
            <person name="Han G."/>
            <person name="Wang F."/>
            <person name="Ye M."/>
            <person name="Wang L."/>
            <person name="Zou H."/>
        </authorList>
    </citation>
    <scope>GLYCOSYLATION [LARGE SCALE ANALYSIS] AT ASN-101; ASN-123; ASN-257 AND ASN-356</scope>
    <source>
        <tissue>Liver</tissue>
    </source>
</reference>
<reference key="24">
    <citation type="journal article" date="2010" name="Immunology">
        <title>LAMP-2-deficient human B cells exhibit altered MHC class II presentation of exogenous antigens.</title>
        <authorList>
            <person name="Crotzer V.L."/>
            <person name="Glosson N."/>
            <person name="Zhou D."/>
            <person name="Nishino I."/>
            <person name="Blum J.S."/>
        </authorList>
    </citation>
    <scope>FUNCTION</scope>
</reference>
<reference key="25">
    <citation type="journal article" date="2011" name="BMC Syst. Biol.">
        <title>Initial characterization of the human central proteome.</title>
        <authorList>
            <person name="Burkard T.R."/>
            <person name="Planyavsky M."/>
            <person name="Kaupe I."/>
            <person name="Breitwieser F.P."/>
            <person name="Buerckstuemmer T."/>
            <person name="Bennett K.L."/>
            <person name="Superti-Furga G."/>
            <person name="Colinge J."/>
        </authorList>
    </citation>
    <scope>IDENTIFICATION BY MASS SPECTROMETRY [LARGE SCALE ANALYSIS]</scope>
</reference>
<reference key="26">
    <citation type="journal article" date="2012" name="J. Cell Sci.">
        <title>The lysosomal polypeptide transporter TAPL is stabilized by interaction with LAMP-1 and LAMP-2.</title>
        <authorList>
            <person name="Demirel O."/>
            <person name="Jan I."/>
            <person name="Wolters D."/>
            <person name="Blanz J."/>
            <person name="Saftig P."/>
            <person name="Tampe R."/>
            <person name="Abele R."/>
        </authorList>
    </citation>
    <scope>INTERACTION WITH ABCB9</scope>
</reference>
<reference key="27">
    <citation type="journal article" date="2014" name="Exp. Cell Res.">
        <title>Degradation of AF1Q by chaperone-mediated autophagy.</title>
        <authorList>
            <person name="Li P."/>
            <person name="Ji M."/>
            <person name="Lu F."/>
            <person name="Zhang J."/>
            <person name="Li H."/>
            <person name="Cui T."/>
            <person name="Li Wang X."/>
            <person name="Tang D."/>
            <person name="Ji C."/>
        </authorList>
    </citation>
    <scope>INTERACTION WITH MLLT11</scope>
    <scope>FUNCTION</scope>
</reference>
<reference key="28">
    <citation type="journal article" date="2015" name="Proteomics">
        <title>N-terminome analysis of the human mitochondrial proteome.</title>
        <authorList>
            <person name="Vaca Jacome A.S."/>
            <person name="Rabilloud T."/>
            <person name="Schaeffer-Reiss C."/>
            <person name="Rompais M."/>
            <person name="Ayoub D."/>
            <person name="Lane L."/>
            <person name="Bairoch A."/>
            <person name="Van Dorsselaer A."/>
            <person name="Carapito C."/>
        </authorList>
    </citation>
    <scope>IDENTIFICATION BY MASS SPECTROMETRY [LARGE SCALE ANALYSIS]</scope>
</reference>
<reference key="29">
    <citation type="journal article" date="2016" name="Biol. Open">
        <title>LAMP-2 is required for incorporating syntaxin-17 into autophagosomes and for their fusion with lysosomes.</title>
        <authorList>
            <person name="Hubert V."/>
            <person name="Peschel A."/>
            <person name="Langer B."/>
            <person name="Groeger M."/>
            <person name="Rees A."/>
            <person name="Kain R."/>
        </authorList>
    </citation>
    <scope>FUNCTION</scope>
</reference>
<reference key="30">
    <citation type="journal article" date="2016" name="J. Immunol.">
        <title>LAMP-2C inhibits MHC class II presentation of cytoplasmic antigens by disrupting chaperone-mediated autophagy.</title>
        <authorList>
            <person name="Perez L."/>
            <person name="McLetchie S."/>
            <person name="Gardiner G.J."/>
            <person name="Deffit S.N."/>
            <person name="Zhou D."/>
            <person name="Blum J.S."/>
        </authorList>
    </citation>
    <scope>FUNCTION (ISOFORM LAMP-2C)</scope>
    <scope>TISSUE SPECIFICITY</scope>
    <scope>INDUCTION BY B CELL STIMULATION</scope>
</reference>
<reference key="31">
    <citation type="journal article" date="2020" name="J. Virol.">
        <title>Lysosome-Associated Membrane Proteins Support the Furin-Mediated Processing of the Mumps Virus Fusion Protein.</title>
        <authorList>
            <person name="Ueo A."/>
            <person name="Kubota M."/>
            <person name="Shirogane Y."/>
            <person name="Ohno S."/>
            <person name="Hashiguchi T."/>
            <person name="Yanagi Y."/>
        </authorList>
    </citation>
    <scope>FUNCTION (MICROBIAL INFECTION)</scope>
    <scope>INTERACTION WITH FURIN</scope>
    <scope>INTERACTION WITH MUMPS VIRURS PROTEIN F (MICROBIAL INFECTION)</scope>
</reference>
<reference key="32">
    <citation type="journal article" date="2022" name="Mol. Cell">
        <title>Palmitoylation prevents sustained inflammation by limiting NLRP3 inflammasome activation through chaperone-mediated autophagy.</title>
        <authorList>
            <person name="Wang L."/>
            <person name="Cai J."/>
            <person name="Zhao X."/>
            <person name="Ma L."/>
            <person name="Zeng P."/>
            <person name="Zhou L."/>
            <person name="Liu Y."/>
            <person name="Yang S."/>
            <person name="Cai Z."/>
            <person name="Zhang S."/>
            <person name="Zhou L."/>
            <person name="Yang J."/>
            <person name="Liu T."/>
            <person name="Jin S."/>
            <person name="Cui J."/>
        </authorList>
    </citation>
    <scope>FUNCTION</scope>
</reference>
<reference key="33">
    <citation type="journal article" date="2023" name="Cell Death Differ.">
        <title>Deficiency of cancer/testis antigen gene CT55 causes male infertility in humans and mice.</title>
        <authorList>
            <person name="Zhang G."/>
            <person name="Jiang C."/>
            <person name="Yang Y."/>
            <person name="Wang Y."/>
            <person name="Zhou H."/>
            <person name="Dai S."/>
            <person name="Liu M."/>
            <person name="Yang Y."/>
            <person name="Yang L."/>
            <person name="Shen Q."/>
            <person name="Zhang T."/>
            <person name="Zhang X."/>
            <person name="Yang Y."/>
            <person name="Shen Y."/>
        </authorList>
    </citation>
    <scope>INTERACTION WITH CT55</scope>
</reference>
<reference key="34">
    <citation type="journal article" date="2023" name="Mol. Cell">
        <title>Lysosomal LAMP proteins regulate lysosomal pH by direct inhibition of the TMEM175 channel.</title>
        <authorList>
            <person name="Zhang J."/>
            <person name="Zeng W."/>
            <person name="Han Y."/>
            <person name="Lee W.R."/>
            <person name="Liou J."/>
            <person name="Jiang Y."/>
        </authorList>
    </citation>
    <scope>FUNCTION</scope>
    <scope>INTERACTION WITH TMEM175</scope>
</reference>
<reference key="35">
    <citation type="journal article" date="2014" name="J. Biol. Chem.">
        <title>Structure of transmembrane domain of lysosome-associated membrane protein type 2a (LAMP-2A) reveals key features for substrate specificity in chaperone-mediated autophagy.</title>
        <authorList>
            <person name="Rout A.K."/>
            <person name="Strub M.P."/>
            <person name="Piszczek G."/>
            <person name="Tjandra N."/>
        </authorList>
    </citation>
    <scope>STRUCTURE BY NMR OF 369-410</scope>
    <scope>INTERACTION WITH HSPA8</scope>
    <scope>SUBUNIT</scope>
</reference>
<reference key="36">
    <citation type="journal article" date="2005" name="N. Engl. J. Med.">
        <title>Glycogen storage diseases presenting as hypertrophic cardiomyopathy.</title>
        <authorList>
            <person name="Arad M."/>
            <person name="Maron B.J."/>
            <person name="Gorham J.M."/>
            <person name="Johnson W.H. Jr."/>
            <person name="Saul J.P."/>
            <person name="Perez-Atayde A.R."/>
            <person name="Spirito P."/>
            <person name="Wright G.B."/>
            <person name="Kanter R.J."/>
            <person name="Seidman C.E."/>
            <person name="Seidman J.G."/>
        </authorList>
    </citation>
    <scope>VARIANT DAND ARG-321</scope>
</reference>
<reference key="37">
    <citation type="journal article" date="2005" name="Neuromuscul. Disord.">
        <title>Asymptomatic hyperCKemia in a case of Danon disease due to a missense mutation in Lamp-2 gene.</title>
        <authorList>
            <person name="Musumeci O."/>
            <person name="Rodolico C."/>
            <person name="Nishino I."/>
            <person name="Di Guardo G."/>
            <person name="Migliorato A."/>
            <person name="Aguennouz M."/>
            <person name="Mazzeo A."/>
            <person name="Messina C."/>
            <person name="Vita G."/>
            <person name="Toscano A."/>
        </authorList>
    </citation>
    <scope>VARIANT DAND ARG-321</scope>
</reference>
<evidence type="ECO:0000250" key="1">
    <source>
        <dbReference type="UniProtKB" id="P17046"/>
    </source>
</evidence>
<evidence type="ECO:0000250" key="2">
    <source>
        <dbReference type="UniProtKB" id="P17047"/>
    </source>
</evidence>
<evidence type="ECO:0000255" key="3"/>
<evidence type="ECO:0000255" key="4">
    <source>
        <dbReference type="PROSITE-ProRule" id="PRU00740"/>
    </source>
</evidence>
<evidence type="ECO:0000256" key="5">
    <source>
        <dbReference type="SAM" id="MobiDB-lite"/>
    </source>
</evidence>
<evidence type="ECO:0000269" key="6">
    <source>
    </source>
</evidence>
<evidence type="ECO:0000269" key="7">
    <source>
    </source>
</evidence>
<evidence type="ECO:0000269" key="8">
    <source>
    </source>
</evidence>
<evidence type="ECO:0000269" key="9">
    <source>
    </source>
</evidence>
<evidence type="ECO:0000269" key="10">
    <source>
    </source>
</evidence>
<evidence type="ECO:0000269" key="11">
    <source>
    </source>
</evidence>
<evidence type="ECO:0000269" key="12">
    <source>
    </source>
</evidence>
<evidence type="ECO:0000269" key="13">
    <source>
    </source>
</evidence>
<evidence type="ECO:0000269" key="14">
    <source>
    </source>
</evidence>
<evidence type="ECO:0000269" key="15">
    <source>
    </source>
</evidence>
<evidence type="ECO:0000269" key="16">
    <source>
    </source>
</evidence>
<evidence type="ECO:0000269" key="17">
    <source>
    </source>
</evidence>
<evidence type="ECO:0000269" key="18">
    <source>
    </source>
</evidence>
<evidence type="ECO:0000269" key="19">
    <source>
    </source>
</evidence>
<evidence type="ECO:0000269" key="20">
    <source>
    </source>
</evidence>
<evidence type="ECO:0000269" key="21">
    <source>
    </source>
</evidence>
<evidence type="ECO:0000269" key="22">
    <source>
    </source>
</evidence>
<evidence type="ECO:0000269" key="23">
    <source>
    </source>
</evidence>
<evidence type="ECO:0000269" key="24">
    <source>
    </source>
</evidence>
<evidence type="ECO:0000269" key="25">
    <source>
    </source>
</evidence>
<evidence type="ECO:0000269" key="26">
    <source>
    </source>
</evidence>
<evidence type="ECO:0000269" key="27">
    <source>
    </source>
</evidence>
<evidence type="ECO:0000269" key="28">
    <source>
    </source>
</evidence>
<evidence type="ECO:0000269" key="29">
    <source>
    </source>
</evidence>
<evidence type="ECO:0000269" key="30">
    <source>
    </source>
</evidence>
<evidence type="ECO:0000269" key="31">
    <source>
    </source>
</evidence>
<evidence type="ECO:0000303" key="32">
    <source>
    </source>
</evidence>
<evidence type="ECO:0000303" key="33">
    <source>
    </source>
</evidence>
<evidence type="ECO:0000303" key="34">
    <source>
    </source>
</evidence>
<evidence type="ECO:0000303" key="35">
    <source>
    </source>
</evidence>
<evidence type="ECO:0000303" key="36">
    <source>
    </source>
</evidence>
<evidence type="ECO:0000303" key="37">
    <source ref="6"/>
</evidence>
<evidence type="ECO:0000305" key="38"/>
<evidence type="ECO:0007829" key="39">
    <source>
        <dbReference type="PDB" id="2MOF"/>
    </source>
</evidence>
<sequence>MVCFRLFPVPGSGLVLVCLVLGAVRSYALELNLTDSENATCLYAKWQMNFTVRYETTNKTYKTVTISDHGTVTYNGSICGDDQNGPKIAVQFGPGFSWIANFTKAASTYSIDSVSFSYNTGDNTTFPDAEDKGILTVDELLAIRIPLNDLFRCNSLSTLEKNDVVQHYWDVLVQAFVQNGTVSTNEFLCDKDKTSTVAPTIHTTVPSPTTTPTPKEKPEAGTYSVNNGNDTCLLATMGLQLNITQDKVASVININPNTTHSTGSCRSHTALLRLNSSTIKYLDFVFAVKNENRFYLKEVNISMYLVNGSVFSIANNNLSYWDAPLGSSYMCNKEQTVSVSGAFQINTFDLRVQPFNVTQGKYSTAQDCSADDDNFLVPIAVGAALAGVLILVLLAYFIGLKHHHAGYEQF</sequence>
<proteinExistence type="evidence at protein level"/>
<comment type="function">
    <text evidence="1 6 10 14 16 19 22 27 28 31">Lysosomal membrane glycoprotein which plays an important role in lysosome biogenesis, lysosomal pH regulation and autophagy (PubMed:11082038, PubMed:18644871, PubMed:24880125, PubMed:27628032, PubMed:36586411, PubMed:37390818, PubMed:8662539). Acts as an important regulator of lysosomal lumen pH regulation by acting as a direct inhibitor of the proton channel TMEM175, facilitating lysosomal acidification for optimal hydrolase activity (PubMed:37390818). Plays an important role in chaperone-mediated autophagy, a process that mediates lysosomal degradation of proteins in response to various stresses and as part of the normal turnover of proteins with a long biological half-live (PubMed:11082038, PubMed:18644871, PubMed:24880125, PubMed:27628032, PubMed:36586411, PubMed:8662539). Functions by binding target proteins, such as GAPDH, NLRP3 and MLLT11, and targeting them for lysosomal degradation (PubMed:11082038, PubMed:18644871, PubMed:24880125, PubMed:36586411, PubMed:8662539). In the chaperone-mediated autophagy, acts downstream of chaperones, such as HSPA8/HSC70, which recognize and bind substrate proteins and mediate their recruitment to lysosomes, where target proteins bind LAMP2 (PubMed:36586411). Plays a role in lysosomal protein degradation in response to starvation (By similarity). Required for the fusion of autophagosomes with lysosomes during autophagy (PubMed:27628032). Cells that lack LAMP2 express normal levels of VAMP8, but fail to accumulate STX17 on autophagosomes, which is the most likely explanation for the lack of fusion between autophagosomes and lysosomes (PubMed:27628032). Required for normal degradation of the contents of autophagosomes (PubMed:27628032). Required for efficient MHC class II-mediated presentation of exogenous antigens via its function in lysosomal protein degradation; antigenic peptides generated by proteases in the endosomal/lysosomal compartment are captured by nascent MHC II subunits (PubMed:15894275, PubMed:20518820). Is not required for efficient MHC class II-mediated presentation of endogenous antigens (PubMed:20518820).</text>
</comment>
<comment type="function">
    <molecule>Isoform LAMP-2C</molecule>
    <text evidence="21">Modulates chaperone-mediated autophagy. Decreases presentation of endogenous antigens by MHCII. Does not play a role in the presentation of exogenous and membrane-derived antigens by MHCII.</text>
</comment>
<comment type="function">
    <text evidence="25">(Microbial infection) Supports the FURIN-mediated cleavage of mumps virus fusion protein F by interacting with both FURIN and the unprocessed form but not the processed form of the viral protein F.</text>
</comment>
<comment type="subunit">
    <text evidence="1 2 14 18 19 20 25 26 28">Monomer (PubMed:18644871, PubMed:25342746). Homodimer (PubMed:25342746). Homotrimer (PubMed:25342746). Forms large homooligomers (PubMed:18644871). Interacts (via its cytoplasmic region) with HSPA8; HSPA8 mediates recruitment of proteins with a KFERQ motif to the surface of the lysosome for chaperone-mediated autophagy (PubMed:25342746, PubMed:36586411). Interacts with HSP90 in the lysosome lumen; this enhances LAMP2 stability (By similarity). Interacts with MLLT11 (PubMed:24880125). Interacts with ABCB9 (PubMed:22641697). Interacts with FURIN (PubMed:32295904). Interacts with CT55; this interaction may be important for LAMP2 protein stability (PubMed:36481789). Interacts with TMEM175; inhibiting the proton channel activity of TMEM175 (PubMed:37390818). Forms a ternary complex with RAB7A and RUFY4 (via RUN domain); the interaction with RAB7A is mediated by RUFY4 (via RUN and coiled coil domains) (By similarity).</text>
</comment>
<comment type="subunit">
    <text evidence="25">(Microbial infection) Interacts with mumps virus protein F; this interaction promotes protein F cleavage by FURIN.</text>
</comment>
<comment type="interaction">
    <interactant intactId="EBI-21591415">
        <id>P13473-2</id>
    </interactant>
    <interactant intactId="EBI-25873349">
        <id>P45844-6</id>
        <label>ABCG1</label>
    </interactant>
    <organismsDiffer>false</organismsDiffer>
    <experiments>3</experiments>
</comment>
<comment type="interaction">
    <interactant intactId="EBI-21591415">
        <id>P13473-2</id>
    </interactant>
    <interactant intactId="EBI-21854797">
        <id>Q7Z5M8-2</id>
        <label>ABHD12B</label>
    </interactant>
    <organismsDiffer>false</organismsDiffer>
    <experiments>3</experiments>
</comment>
<comment type="interaction">
    <interactant intactId="EBI-21591415">
        <id>P13473-2</id>
    </interactant>
    <interactant intactId="EBI-25835070">
        <id>Q9Y614</id>
        <label>ACTL7B</label>
    </interactant>
    <organismsDiffer>false</organismsDiffer>
    <experiments>3</experiments>
</comment>
<comment type="interaction">
    <interactant intactId="EBI-21591415">
        <id>P13473-2</id>
    </interactant>
    <interactant intactId="EBI-18899653">
        <id>Q6DHV7-2</id>
        <label>ADAL</label>
    </interactant>
    <organismsDiffer>false</organismsDiffer>
    <experiments>3</experiments>
</comment>
<comment type="interaction">
    <interactant intactId="EBI-21591415">
        <id>P13473-2</id>
    </interactant>
    <interactant intactId="EBI-10173507">
        <id>Q6UY14-3</id>
        <label>ADAMTSL4</label>
    </interactant>
    <organismsDiffer>false</organismsDiffer>
    <experiments>3</experiments>
</comment>
<comment type="interaction">
    <interactant intactId="EBI-21591415">
        <id>P13473-2</id>
    </interactant>
    <interactant intactId="EBI-8466265">
        <id>Q96MA6</id>
        <label>AK8</label>
    </interactant>
    <organismsDiffer>false</organismsDiffer>
    <experiments>3</experiments>
</comment>
<comment type="interaction">
    <interactant intactId="EBI-21591415">
        <id>P13473-2</id>
    </interactant>
    <interactant intactId="EBI-22006248">
        <id>Q5T2L2</id>
        <label>AKR1C8</label>
    </interactant>
    <organismsDiffer>false</organismsDiffer>
    <experiments>3</experiments>
</comment>
<comment type="interaction">
    <interactant intactId="EBI-21591415">
        <id>P13473-2</id>
    </interactant>
    <interactant intactId="EBI-9089544">
        <id>Q96Q83-2</id>
        <label>ALKBH3</label>
    </interactant>
    <organismsDiffer>false</organismsDiffer>
    <experiments>3</experiments>
</comment>
<comment type="interaction">
    <interactant intactId="EBI-21591415">
        <id>P13473-2</id>
    </interactant>
    <interactant intactId="EBI-12323557">
        <id>Q9Y303-2</id>
        <label>AMDHD2</label>
    </interactant>
    <organismsDiffer>false</organismsDiffer>
    <experiments>3</experiments>
</comment>
<comment type="interaction">
    <interactant intactId="EBI-21591415">
        <id>P13473-2</id>
    </interactant>
    <interactant intactId="EBI-8464238">
        <id>Q9NU02</id>
        <label>ANKEF1</label>
    </interactant>
    <organismsDiffer>false</organismsDiffer>
    <experiments>3</experiments>
</comment>
<comment type="interaction">
    <interactant intactId="EBI-21591415">
        <id>P13473-2</id>
    </interactant>
    <interactant intactId="EBI-2556852">
        <id>P09525</id>
        <label>ANXA4</label>
    </interactant>
    <organismsDiffer>false</organismsDiffer>
    <experiments>3</experiments>
</comment>
<comment type="interaction">
    <interactant intactId="EBI-21591415">
        <id>P13473-2</id>
    </interactant>
    <interactant intactId="EBI-701692">
        <id>P02647</id>
        <label>APOA1</label>
    </interactant>
    <organismsDiffer>false</organismsDiffer>
    <experiments>3</experiments>
</comment>
<comment type="interaction">
    <interactant intactId="EBI-21591415">
        <id>P13473-2</id>
    </interactant>
    <interactant intactId="EBI-2114682">
        <id>P02749</id>
        <label>APOH</label>
    </interactant>
    <organismsDiffer>false</organismsDiffer>
    <experiments>3</experiments>
</comment>
<comment type="interaction">
    <interactant intactId="EBI-21591415">
        <id>P13473-2</id>
    </interactant>
    <interactant intactId="EBI-638194">
        <id>P53365</id>
        <label>ARFIP2</label>
    </interactant>
    <organismsDiffer>false</organismsDiffer>
    <experiments>3</experiments>
</comment>
<comment type="interaction">
    <interactant intactId="EBI-21591415">
        <id>P13473-2</id>
    </interactant>
    <interactant intactId="EBI-5280499">
        <id>Q66PJ3-4</id>
        <label>ARL6IP4</label>
    </interactant>
    <organismsDiffer>false</organismsDiffer>
    <experiments>3</experiments>
</comment>
<comment type="interaction">
    <interactant intactId="EBI-21591415">
        <id>P13473-2</id>
    </interactant>
    <interactant intactId="EBI-10254793">
        <id>Q6XD76</id>
        <label>ASCL4</label>
    </interactant>
    <organismsDiffer>false</organismsDiffer>
    <experiments>3</experiments>
</comment>
<comment type="interaction">
    <interactant intactId="EBI-21591415">
        <id>P13473-2</id>
    </interactant>
    <interactant intactId="EBI-492498">
        <id>P18848</id>
        <label>ATF4</label>
    </interactant>
    <organismsDiffer>false</organismsDiffer>
    <experiments>3</experiments>
</comment>
<comment type="interaction">
    <interactant intactId="EBI-21591415">
        <id>P13473-2</id>
    </interactant>
    <interactant intactId="EBI-1048913">
        <id>Q9H0Y0</id>
        <label>ATG10</label>
    </interactant>
    <organismsDiffer>false</organismsDiffer>
    <experiments>3</experiments>
</comment>
<comment type="interaction">
    <interactant intactId="EBI-21591415">
        <id>P13473-2</id>
    </interactant>
    <interactant intactId="EBI-25836940">
        <id>C1IDX9</id>
        <label>ATG12</label>
    </interactant>
    <organismsDiffer>false</organismsDiffer>
    <experiments>3</experiments>
</comment>
<comment type="interaction">
    <interactant intactId="EBI-21591415">
        <id>P13473-2</id>
    </interactant>
    <interactant intactId="EBI-1044001">
        <id>O75964</id>
        <label>ATP5MG</label>
    </interactant>
    <organismsDiffer>false</organismsDiffer>
    <experiments>3</experiments>
</comment>
<comment type="interaction">
    <interactant intactId="EBI-21591415">
        <id>P13473-2</id>
    </interactant>
    <interactant intactId="EBI-8994378">
        <id>Q14032</id>
        <label>BAAT</label>
    </interactant>
    <organismsDiffer>false</organismsDiffer>
    <experiments>3</experiments>
</comment>
<comment type="interaction">
    <interactant intactId="EBI-21591415">
        <id>P13473-2</id>
    </interactant>
    <interactant intactId="EBI-25834445">
        <id>P54687-4</id>
        <label>BCAT1</label>
    </interactant>
    <organismsDiffer>false</organismsDiffer>
    <experiments>3</experiments>
</comment>
<comment type="interaction">
    <interactant intactId="EBI-21591415">
        <id>P13473-2</id>
    </interactant>
    <interactant intactId="EBI-7936069">
        <id>P06276</id>
        <label>BCHE</label>
    </interactant>
    <organismsDiffer>false</organismsDiffer>
    <experiments>3</experiments>
</comment>
<comment type="interaction">
    <interactant intactId="EBI-21591415">
        <id>P13473-2</id>
    </interactant>
    <interactant intactId="EBI-10693038">
        <id>Q9NSI6-4</id>
        <label>BRWD1</label>
    </interactant>
    <organismsDiffer>false</organismsDiffer>
    <experiments>3</experiments>
</comment>
<comment type="interaction">
    <interactant intactId="EBI-21591415">
        <id>P13473-2</id>
    </interactant>
    <interactant intactId="EBI-7996695">
        <id>Q8WZ55</id>
        <label>BSND</label>
    </interactant>
    <organismsDiffer>false</organismsDiffer>
    <experiments>3</experiments>
</comment>
<comment type="interaction">
    <interactant intactId="EBI-21591415">
        <id>P13473-2</id>
    </interactant>
    <interactant intactId="EBI-22006737">
        <id>Q96Q07-2</id>
        <label>BTBD9</label>
    </interactant>
    <organismsDiffer>false</organismsDiffer>
    <experiments>3</experiments>
</comment>
<comment type="interaction">
    <interactant intactId="EBI-21591415">
        <id>P13473-2</id>
    </interactant>
    <interactant intactId="EBI-12108466">
        <id>Q9H0W9-3</id>
        <label>C11orf54</label>
    </interactant>
    <organismsDiffer>false</organismsDiffer>
    <experiments>3</experiments>
</comment>
<comment type="interaction">
    <interactant intactId="EBI-21591415">
        <id>P13473-2</id>
    </interactant>
    <interactant intactId="EBI-3844053">
        <id>Q13901</id>
        <label>C1D</label>
    </interactant>
    <organismsDiffer>false</organismsDiffer>
    <experiments>3</experiments>
</comment>
<comment type="interaction">
    <interactant intactId="EBI-21591415">
        <id>P13473-2</id>
    </interactant>
    <interactant intactId="EBI-18036948">
        <id>Q3SXR2</id>
        <label>C3orf36</label>
    </interactant>
    <organismsDiffer>false</organismsDiffer>
    <experiments>3</experiments>
</comment>
<comment type="interaction">
    <interactant intactId="EBI-21591415">
        <id>P13473-2</id>
    </interactant>
    <interactant intactId="EBI-10264911">
        <id>Q8N1A6</id>
        <label>C4orf33</label>
    </interactant>
    <organismsDiffer>false</organismsDiffer>
    <experiments>3</experiments>
</comment>
<comment type="interaction">
    <interactant intactId="EBI-21591415">
        <id>P13473-2</id>
    </interactant>
    <interactant intactId="EBI-1028956">
        <id>P17655</id>
        <label>CAPN2</label>
    </interactant>
    <organismsDiffer>false</organismsDiffer>
    <experiments>3</experiments>
</comment>
<comment type="interaction">
    <interactant intactId="EBI-21591415">
        <id>P13473-2</id>
    </interactant>
    <interactant intactId="EBI-11532021">
        <id>P20807-4</id>
        <label>CAPN3</label>
    </interactant>
    <organismsDiffer>false</organismsDiffer>
    <experiments>3</experiments>
</comment>
<comment type="interaction">
    <interactant intactId="EBI-21591415">
        <id>P13473-2</id>
    </interactant>
    <interactant intactId="EBI-718729">
        <id>P55212</id>
        <label>CASP6</label>
    </interactant>
    <organismsDiffer>false</organismsDiffer>
    <experiments>3</experiments>
</comment>
<comment type="interaction">
    <interactant intactId="EBI-21591415">
        <id>P13473-2</id>
    </interactant>
    <interactant intactId="EBI-4392727">
        <id>O00257-3</id>
        <label>CBX4</label>
    </interactant>
    <organismsDiffer>false</organismsDiffer>
    <experiments>3</experiments>
</comment>
<comment type="interaction">
    <interactant intactId="EBI-21591415">
        <id>P13473-2</id>
    </interactant>
    <interactant intactId="EBI-395261">
        <id>P24863</id>
        <label>CCNC</label>
    </interactant>
    <organismsDiffer>false</organismsDiffer>
    <experiments>3</experiments>
</comment>
<comment type="interaction">
    <interactant intactId="EBI-21591415">
        <id>P13473-2</id>
    </interactant>
    <interactant intactId="EBI-25873837">
        <id>Q9UK58-5</id>
        <label>CCNL1</label>
    </interactant>
    <organismsDiffer>false</organismsDiffer>
    <experiments>3</experiments>
</comment>
<comment type="interaction">
    <interactant intactId="EBI-21591415">
        <id>P13473-2</id>
    </interactant>
    <interactant intactId="EBI-12300031">
        <id>Q9NNX6-10</id>
        <label>CD209</label>
    </interactant>
    <organismsDiffer>false</organismsDiffer>
    <experiments>3</experiments>
</comment>
<comment type="interaction">
    <interactant intactId="EBI-21591415">
        <id>P13473-2</id>
    </interactant>
    <interactant intactId="EBI-353826">
        <id>P01730</id>
        <label>CD4</label>
    </interactant>
    <organismsDiffer>false</organismsDiffer>
    <experiments>3</experiments>
</comment>
<comment type="interaction">
    <interactant intactId="EBI-21591415">
        <id>P13473-2</id>
    </interactant>
    <interactant intactId="EBI-396137">
        <id>Q9UJX2</id>
        <label>CDC23</label>
    </interactant>
    <organismsDiffer>false</organismsDiffer>
    <experiments>3</experiments>
</comment>
<comment type="interaction">
    <interactant intactId="EBI-21591415">
        <id>P13473-2</id>
    </interactant>
    <interactant intactId="EBI-711290">
        <id>P42773</id>
        <label>CDKN2C</label>
    </interactant>
    <organismsDiffer>false</organismsDiffer>
    <experiments>3</experiments>
</comment>
<comment type="interaction">
    <interactant intactId="EBI-21591415">
        <id>P13473-2</id>
    </interactant>
    <interactant intactId="EBI-3913685">
        <id>O95674</id>
        <label>CDS2</label>
    </interactant>
    <organismsDiffer>false</organismsDiffer>
    <experiments>3</experiments>
</comment>
<comment type="interaction">
    <interactant intactId="EBI-21591415">
        <id>P13473-2</id>
    </interactant>
    <interactant intactId="EBI-712959">
        <id>O15182</id>
        <label>CETN3</label>
    </interactant>
    <organismsDiffer>false</organismsDiffer>
    <experiments>3</experiments>
</comment>
<comment type="interaction">
    <interactant intactId="EBI-21591415">
        <id>P13473-2</id>
    </interactant>
    <interactant intactId="EBI-749253">
        <id>Q8WUX9</id>
        <label>CHMP7</label>
    </interactant>
    <organismsDiffer>false</organismsDiffer>
    <experiments>3</experiments>
</comment>
<comment type="interaction">
    <interactant intactId="EBI-21591415">
        <id>P13473-2</id>
    </interactant>
    <interactant intactId="EBI-744045">
        <id>Q9Y3D0</id>
        <label>CIAO2B</label>
    </interactant>
    <organismsDiffer>false</organismsDiffer>
    <experiments>3</experiments>
</comment>
<comment type="interaction">
    <interactant intactId="EBI-21591415">
        <id>P13473-2</id>
    </interactant>
    <interactant intactId="EBI-10265133">
        <id>Q8N365</id>
        <label>CIART</label>
    </interactant>
    <organismsDiffer>false</organismsDiffer>
    <experiments>3</experiments>
</comment>
<comment type="interaction">
    <interactant intactId="EBI-21591415">
        <id>P13473-2</id>
    </interactant>
    <interactant intactId="EBI-7062247">
        <id>Q9UHD4</id>
        <label>CIDEB</label>
    </interactant>
    <organismsDiffer>false</organismsDiffer>
    <experiments>3</experiments>
</comment>
<comment type="interaction">
    <interactant intactId="EBI-21591415">
        <id>P13473-2</id>
    </interactant>
    <interactant intactId="EBI-2624951">
        <id>Q99966</id>
        <label>CITED1</label>
    </interactant>
    <organismsDiffer>false</organismsDiffer>
    <experiments>3</experiments>
</comment>
<comment type="interaction">
    <interactant intactId="EBI-21591415">
        <id>P13473-2</id>
    </interactant>
    <interactant intactId="EBI-4401010">
        <id>P09496-2</id>
        <label>CLTA</label>
    </interactant>
    <organismsDiffer>false</organismsDiffer>
    <experiments>3</experiments>
</comment>
<comment type="interaction">
    <interactant intactId="EBI-21591415">
        <id>P13473-2</id>
    </interactant>
    <interactant intactId="EBI-25836090">
        <id>Q6PJW8-3</id>
        <label>CNST</label>
    </interactant>
    <organismsDiffer>false</organismsDiffer>
    <experiments>3</experiments>
</comment>
<comment type="interaction">
    <interactant intactId="EBI-21591415">
        <id>P13473-2</id>
    </interactant>
    <interactant intactId="EBI-6269632">
        <id>Q96BR5</id>
        <label>COA7</label>
    </interactant>
    <organismsDiffer>false</organismsDiffer>
    <experiments>3</experiments>
</comment>
<comment type="interaction">
    <interactant intactId="EBI-21591415">
        <id>P13473-2</id>
    </interactant>
    <interactant intactId="EBI-12375799">
        <id>P02458-1</id>
        <label>COL2A1</label>
    </interactant>
    <organismsDiffer>false</organismsDiffer>
    <experiments>3</experiments>
</comment>
<comment type="interaction">
    <interactant intactId="EBI-21591415">
        <id>P13473-2</id>
    </interactant>
    <interactant intactId="EBI-745535">
        <id>Q8NI60</id>
        <label>COQ8A</label>
    </interactant>
    <organismsDiffer>false</organismsDiffer>
    <experiments>3</experiments>
</comment>
<comment type="interaction">
    <interactant intactId="EBI-21591415">
        <id>P13473-2</id>
    </interactant>
    <interactant intactId="EBI-713677">
        <id>Q9UGL9</id>
        <label>CRCT1</label>
    </interactant>
    <organismsDiffer>false</organismsDiffer>
    <experiments>3</experiments>
</comment>
<comment type="interaction">
    <interactant intactId="EBI-21591415">
        <id>P13473-2</id>
    </interactant>
    <interactant intactId="EBI-1965681">
        <id>P26998</id>
        <label>CRYBB3</label>
    </interactant>
    <organismsDiffer>false</organismsDiffer>
    <experiments>3</experiments>
</comment>
<comment type="interaction">
    <interactant intactId="EBI-21591415">
        <id>P13473-2</id>
    </interactant>
    <interactant intactId="EBI-491549">
        <id>P35222</id>
        <label>CTNNB1</label>
    </interactant>
    <organismsDiffer>false</organismsDiffer>
    <experiments>3</experiments>
</comment>
<comment type="interaction">
    <interactant intactId="EBI-21591415">
        <id>P13473-2</id>
    </interactant>
    <interactant intactId="EBI-8637742">
        <id>Q53TN4</id>
        <label>CYBRD1</label>
    </interactant>
    <organismsDiffer>false</organismsDiffer>
    <experiments>3</experiments>
</comment>
<comment type="interaction">
    <interactant intactId="EBI-21591415">
        <id>P13473-2</id>
    </interactant>
    <interactant intactId="EBI-2951522">
        <id>P10632</id>
        <label>CYP2C8</label>
    </interactant>
    <organismsDiffer>false</organismsDiffer>
    <experiments>3</experiments>
</comment>
<comment type="interaction">
    <interactant intactId="EBI-21591415">
        <id>P13473-2</id>
    </interactant>
    <interactant intactId="EBI-359808">
        <id>P61962</id>
        <label>DCAF7</label>
    </interactant>
    <organismsDiffer>false</organismsDiffer>
    <experiments>3</experiments>
</comment>
<comment type="interaction">
    <interactant intactId="EBI-21591415">
        <id>P13473-2</id>
    </interactant>
    <interactant intactId="EBI-746300">
        <id>Q96LJ7</id>
        <label>DHRS1</label>
    </interactant>
    <organismsDiffer>false</organismsDiffer>
    <experiments>3</experiments>
</comment>
<comment type="interaction">
    <interactant intactId="EBI-21591415">
        <id>P13473-2</id>
    </interactant>
    <interactant intactId="EBI-3908248">
        <id>O60479</id>
        <label>DLX3</label>
    </interactant>
    <organismsDiffer>false</organismsDiffer>
    <experiments>3</experiments>
</comment>
<comment type="interaction">
    <interactant intactId="EBI-21591415">
        <id>P13473-2</id>
    </interactant>
    <interactant intactId="EBI-11526226">
        <id>Q96EY1-3</id>
        <label>DNAJA3</label>
    </interactant>
    <organismsDiffer>false</organismsDiffer>
    <experiments>3</experiments>
</comment>
<comment type="interaction">
    <interactant intactId="EBI-21591415">
        <id>P13473-2</id>
    </interactant>
    <interactant intactId="EBI-296550">
        <id>Q96KC8</id>
        <label>DNAJC1</label>
    </interactant>
    <organismsDiffer>false</organismsDiffer>
    <experiments>3</experiments>
</comment>
<comment type="interaction">
    <interactant intactId="EBI-21591415">
        <id>P13473-2</id>
    </interactant>
    <interactant intactId="EBI-23669343">
        <id>Q92782-2</id>
        <label>DPF1</label>
    </interactant>
    <organismsDiffer>false</organismsDiffer>
    <experiments>3</experiments>
</comment>
<comment type="interaction">
    <interactant intactId="EBI-21591415">
        <id>P13473-2</id>
    </interactant>
    <interactant intactId="EBI-724653">
        <id>Q9BPU6</id>
        <label>DPYSL5</label>
    </interactant>
    <organismsDiffer>false</organismsDiffer>
    <experiments>3</experiments>
</comment>
<comment type="interaction">
    <interactant intactId="EBI-21591415">
        <id>P13473-2</id>
    </interactant>
    <interactant intactId="EBI-10248874">
        <id>Q658K8</id>
        <label>EEF1DP3</label>
    </interactant>
    <organismsDiffer>false</organismsDiffer>
    <experiments>3</experiments>
</comment>
<comment type="interaction">
    <interactant intactId="EBI-21591415">
        <id>P13473-2</id>
    </interactant>
    <interactant intactId="EBI-711990">
        <id>O00303</id>
        <label>EIF3F</label>
    </interactant>
    <organismsDiffer>false</organismsDiffer>
    <experiments>3</experiments>
</comment>
<comment type="interaction">
    <interactant intactId="EBI-21591415">
        <id>P13473-2</id>
    </interactant>
    <interactant intactId="EBI-354047">
        <id>Q13347</id>
        <label>EIF3I</label>
    </interactant>
    <organismsDiffer>false</organismsDiffer>
    <experiments>3</experiments>
</comment>
<comment type="interaction">
    <interactant intactId="EBI-21591415">
        <id>P13473-2</id>
    </interactant>
    <interactant intactId="EBI-395274">
        <id>O00472</id>
        <label>ELL2</label>
    </interactant>
    <organismsDiffer>false</organismsDiffer>
    <experiments>3</experiments>
</comment>
<comment type="interaction">
    <interactant intactId="EBI-21591415">
        <id>P13473-2</id>
    </interactant>
    <interactant intactId="EBI-751327">
        <id>O00423</id>
        <label>EML1</label>
    </interactant>
    <organismsDiffer>false</organismsDiffer>
    <experiments>3</experiments>
</comment>
<comment type="interaction">
    <interactant intactId="EBI-21591415">
        <id>P13473-2</id>
    </interactant>
    <interactant intactId="EBI-25836908">
        <id>O95278-6</id>
        <label>EPM2A</label>
    </interactant>
    <organismsDiffer>false</organismsDiffer>
    <experiments>3</experiments>
</comment>
<comment type="interaction">
    <interactant intactId="EBI-21591415">
        <id>P13473-2</id>
    </interactant>
    <interactant intactId="EBI-21567429">
        <id>Q6NXG1-3</id>
        <label>ESRP1</label>
    </interactant>
    <organismsDiffer>false</organismsDiffer>
    <experiments>3</experiments>
</comment>
<comment type="interaction">
    <interactant intactId="EBI-21591415">
        <id>P13473-2</id>
    </interactant>
    <interactant intactId="EBI-6378830">
        <id>P00748</id>
        <label>F12</label>
    </interactant>
    <organismsDiffer>false</organismsDiffer>
    <experiments>3</experiments>
</comment>
<comment type="interaction">
    <interactant intactId="EBI-21591415">
        <id>P13473-2</id>
    </interactant>
    <interactant intactId="EBI-25835236">
        <id>Q49AJ0-4</id>
        <label>FAM135B</label>
    </interactant>
    <organismsDiffer>false</organismsDiffer>
    <experiments>3</experiments>
</comment>
<comment type="interaction">
    <interactant intactId="EBI-21591415">
        <id>P13473-2</id>
    </interactant>
    <interactant intactId="EBI-10290462">
        <id>Q96KS9</id>
        <label>FAM167A</label>
    </interactant>
    <organismsDiffer>false</organismsDiffer>
    <experiments>3</experiments>
</comment>
<comment type="interaction">
    <interactant intactId="EBI-21591415">
        <id>P13473-2</id>
    </interactant>
    <interactant intactId="EBI-12201693">
        <id>Q8N128-2</id>
        <label>FAM177A1</label>
    </interactant>
    <organismsDiffer>false</organismsDiffer>
    <experiments>3</experiments>
</comment>
<comment type="interaction">
    <interactant intactId="EBI-21591415">
        <id>P13473-2</id>
    </interactant>
    <interactant intactId="EBI-8468186">
        <id>Q8IZU1</id>
        <label>FAM9A</label>
    </interactant>
    <organismsDiffer>false</organismsDiffer>
    <experiments>3</experiments>
</comment>
<comment type="interaction">
    <interactant intactId="EBI-21591415">
        <id>P13473-2</id>
    </interactant>
    <interactant intactId="EBI-1055752">
        <id>Q9NYY8</id>
        <label>FASTKD2</label>
    </interactant>
    <organismsDiffer>false</organismsDiffer>
    <experiments>3</experiments>
</comment>
<comment type="interaction">
    <interactant intactId="EBI-21591415">
        <id>P13473-2</id>
    </interactant>
    <interactant intactId="EBI-11090973">
        <id>Q9NQ89</id>
        <label>FERRY3</label>
    </interactant>
    <organismsDiffer>false</organismsDiffer>
    <experiments>3</experiments>
</comment>
<comment type="interaction">
    <interactant intactId="EBI-21591415">
        <id>P13473-2</id>
    </interactant>
    <interactant intactId="EBI-9640259">
        <id>P02671-2</id>
        <label>FGA</label>
    </interactant>
    <organismsDiffer>false</organismsDiffer>
    <experiments>3</experiments>
</comment>
<comment type="interaction">
    <interactant intactId="EBI-21591415">
        <id>P13473-2</id>
    </interactant>
    <interactant intactId="EBI-7962481">
        <id>Q6ZNL6</id>
        <label>FGD5</label>
    </interactant>
    <organismsDiffer>false</organismsDiffer>
    <experiments>3</experiments>
</comment>
<comment type="interaction">
    <interactant intactId="EBI-21591415">
        <id>P13473-2</id>
    </interactant>
    <interactant intactId="EBI-3909329">
        <id>Q9NSA1</id>
        <label>FGF21</label>
    </interactant>
    <organismsDiffer>false</organismsDiffer>
    <experiments>3</experiments>
</comment>
<comment type="interaction">
    <interactant intactId="EBI-21591415">
        <id>P13473-2</id>
    </interactant>
    <interactant intactId="EBI-25872794">
        <id>P49771-3</id>
        <label>FLT3LG</label>
    </interactant>
    <organismsDiffer>false</organismsDiffer>
    <experiments>3</experiments>
</comment>
<comment type="interaction">
    <interactant intactId="EBI-21591415">
        <id>P13473-2</id>
    </interactant>
    <interactant intactId="EBI-6425864">
        <id>Q3SYB3</id>
        <label>FOXD4L6</label>
    </interactant>
    <organismsDiffer>false</organismsDiffer>
    <experiments>3</experiments>
</comment>
<comment type="interaction">
    <interactant intactId="EBI-21591415">
        <id>P13473-2</id>
    </interactant>
    <interactant intactId="EBI-25872807">
        <id>Q6P7E6</id>
        <label>FUT6</label>
    </interactant>
    <organismsDiffer>false</organismsDiffer>
    <experiments>3</experiments>
</comment>
<comment type="interaction">
    <interactant intactId="EBI-21591415">
        <id>P13473-2</id>
    </interactant>
    <interactant intactId="EBI-515315">
        <id>P06241</id>
        <label>FYN</label>
    </interactant>
    <organismsDiffer>false</organismsDiffer>
    <experiments>3</experiments>
</comment>
<comment type="interaction">
    <interactant intactId="EBI-21591415">
        <id>P13473-2</id>
    </interactant>
    <interactant intactId="EBI-9088619">
        <id>Q06547-3</id>
        <label>GABPB1</label>
    </interactant>
    <organismsDiffer>false</organismsDiffer>
    <experiments>3</experiments>
</comment>
<comment type="interaction">
    <interactant intactId="EBI-21591415">
        <id>P13473-2</id>
    </interactant>
    <interactant intactId="EBI-2868909">
        <id>Q9H3K2</id>
        <label>GHITM</label>
    </interactant>
    <organismsDiffer>false</organismsDiffer>
    <experiments>3</experiments>
</comment>
<comment type="interaction">
    <interactant intactId="EBI-21591415">
        <id>P13473-2</id>
    </interactant>
    <interactant intactId="EBI-11991950">
        <id>Q8WWP7</id>
        <label>GIMAP1</label>
    </interactant>
    <organismsDiffer>false</organismsDiffer>
    <experiments>3</experiments>
</comment>
<comment type="interaction">
    <interactant intactId="EBI-21591415">
        <id>P13473-2</id>
    </interactant>
    <interactant intactId="EBI-12143817">
        <id>Q49A26-4</id>
        <label>GLYR1</label>
    </interactant>
    <organismsDiffer>false</organismsDiffer>
    <experiments>3</experiments>
</comment>
<comment type="interaction">
    <interactant intactId="EBI-21591415">
        <id>P13473-2</id>
    </interactant>
    <interactant intactId="EBI-358539">
        <id>Q9HAV0</id>
        <label>GNB4</label>
    </interactant>
    <organismsDiffer>false</organismsDiffer>
    <experiments>3</experiments>
</comment>
<comment type="interaction">
    <interactant intactId="EBI-21591415">
        <id>P13473-2</id>
    </interactant>
    <interactant intactId="EBI-715539">
        <id>P32780</id>
        <label>GTF2H1</label>
    </interactant>
    <organismsDiffer>false</organismsDiffer>
    <experiments>3</experiments>
</comment>
<comment type="interaction">
    <interactant intactId="EBI-21591415">
        <id>P13473-2</id>
    </interactant>
    <interactant intactId="EBI-6447217">
        <id>O75409</id>
        <label>H2AP</label>
    </interactant>
    <organismsDiffer>false</organismsDiffer>
    <experiments>3</experiments>
</comment>
<comment type="interaction">
    <interactant intactId="EBI-21591415">
        <id>P13473-2</id>
    </interactant>
    <interactant intactId="EBI-2868501">
        <id>Q6NXT2</id>
        <label>H3-5</label>
    </interactant>
    <organismsDiffer>false</organismsDiffer>
    <experiments>3</experiments>
</comment>
<comment type="interaction">
    <interactant intactId="EBI-21591415">
        <id>P13473-2</id>
    </interactant>
    <interactant intactId="EBI-79722">
        <id>P68431</id>
        <label>H3C12</label>
    </interactant>
    <organismsDiffer>false</organismsDiffer>
    <experiments>3</experiments>
</comment>
<comment type="interaction">
    <interactant intactId="EBI-21591415">
        <id>P13473-2</id>
    </interactant>
    <interactant intactId="EBI-2558143">
        <id>Q9BT25</id>
        <label>HAUS8</label>
    </interactant>
    <organismsDiffer>false</organismsDiffer>
    <experiments>3</experiments>
</comment>
<comment type="interaction">
    <interactant intactId="EBI-21591415">
        <id>P13473-2</id>
    </interactant>
    <interactant intactId="EBI-12003732">
        <id>Q9NRZ9-6</id>
        <label>HELLS</label>
    </interactant>
    <organismsDiffer>false</organismsDiffer>
    <experiments>3</experiments>
</comment>
<comment type="interaction">
    <interactant intactId="EBI-21591415">
        <id>P13473-2</id>
    </interactant>
    <interactant intactId="EBI-25835621">
        <id>Q96EW2-2</id>
        <label>HSPBAP1</label>
    </interactant>
    <organismsDiffer>false</organismsDiffer>
    <experiments>3</experiments>
</comment>
<comment type="interaction">
    <interactant intactId="EBI-21591415">
        <id>P13473-2</id>
    </interactant>
    <interactant intactId="EBI-21771049">
        <id>Q8N6M8-2</id>
        <label>IQCF1</label>
    </interactant>
    <organismsDiffer>false</organismsDiffer>
    <experiments>3</experiments>
</comment>
<comment type="interaction">
    <interactant intactId="EBI-21591415">
        <id>P13473-2</id>
    </interactant>
    <interactant intactId="EBI-10278909">
        <id>Q92613</id>
        <label>JADE3</label>
    </interactant>
    <organismsDiffer>false</organismsDiffer>
    <experiments>3</experiments>
</comment>
<comment type="interaction">
    <interactant intactId="EBI-21591415">
        <id>P13473-2</id>
    </interactant>
    <interactant intactId="EBI-9090173">
        <id>P0C870</id>
        <label>JMJD7</label>
    </interactant>
    <organismsDiffer>false</organismsDiffer>
    <experiments>3</experiments>
</comment>
<comment type="interaction">
    <interactant intactId="EBI-21591415">
        <id>P13473-2</id>
    </interactant>
    <interactant intactId="EBI-720411">
        <id>Q9UK76</id>
        <label>JPT1</label>
    </interactant>
    <organismsDiffer>false</organismsDiffer>
    <experiments>3</experiments>
</comment>
<comment type="interaction">
    <interactant intactId="EBI-21591415">
        <id>P13473-2</id>
    </interactant>
    <interactant intactId="EBI-743960">
        <id>Q8N5Z5</id>
        <label>KCTD17</label>
    </interactant>
    <organismsDiffer>false</organismsDiffer>
    <experiments>3</experiments>
</comment>
<comment type="interaction">
    <interactant intactId="EBI-21591415">
        <id>P13473-2</id>
    </interactant>
    <interactant intactId="EBI-21838933">
        <id>Q8TBB5-2</id>
        <label>KLHDC4</label>
    </interactant>
    <organismsDiffer>false</organismsDiffer>
    <experiments>3</experiments>
</comment>
<comment type="interaction">
    <interactant intactId="EBI-21591415">
        <id>P13473-2</id>
    </interactant>
    <interactant intactId="EBI-8524663">
        <id>Q9UH77</id>
        <label>KLHL3</label>
    </interactant>
    <organismsDiffer>false</organismsDiffer>
    <experiments>3</experiments>
</comment>
<comment type="interaction">
    <interactant intactId="EBI-21591415">
        <id>P13473-2</id>
    </interactant>
    <interactant intactId="EBI-10973851">
        <id>Q8N4N3-2</id>
        <label>KLHL36</label>
    </interactant>
    <organismsDiffer>false</organismsDiffer>
    <experiments>3</experiments>
</comment>
<comment type="interaction">
    <interactant intactId="EBI-21591415">
        <id>P13473-2</id>
    </interactant>
    <interactant intactId="EBI-8473062">
        <id>Q8N1A0</id>
        <label>KRT222</label>
    </interactant>
    <organismsDiffer>false</organismsDiffer>
    <experiments>3</experiments>
</comment>
<comment type="interaction">
    <interactant intactId="EBI-21591415">
        <id>P13473-2</id>
    </interactant>
    <interactant intactId="EBI-9088829">
        <id>Q6DKI2</id>
        <label>LGALS9C</label>
    </interactant>
    <organismsDiffer>false</organismsDiffer>
    <experiments>3</experiments>
</comment>
<comment type="interaction">
    <interactant intactId="EBI-21591415">
        <id>P13473-2</id>
    </interactant>
    <interactant intactId="EBI-25835523">
        <id>Q9H2C1</id>
        <label>LHX5</label>
    </interactant>
    <organismsDiffer>false</organismsDiffer>
    <experiments>3</experiments>
</comment>
<comment type="interaction">
    <interactant intactId="EBI-21591415">
        <id>P13473-2</id>
    </interactant>
    <interactant intactId="EBI-10264791">
        <id>Q8N0U6</id>
        <label>LINC00518</label>
    </interactant>
    <organismsDiffer>false</organismsDiffer>
    <experiments>3</experiments>
</comment>
<comment type="interaction">
    <interactant intactId="EBI-21591415">
        <id>P13473-2</id>
    </interactant>
    <interactant intactId="EBI-727376">
        <id>Q9Y234</id>
        <label>LIPT1</label>
    </interactant>
    <organismsDiffer>false</organismsDiffer>
    <experiments>3</experiments>
</comment>
<comment type="interaction">
    <interactant intactId="EBI-21591415">
        <id>P13473-2</id>
    </interactant>
    <interactant intactId="EBI-725647">
        <id>Q99732</id>
        <label>LITAF</label>
    </interactant>
    <organismsDiffer>false</organismsDiffer>
    <experiments>3</experiments>
</comment>
<comment type="interaction">
    <interactant intactId="EBI-21591415">
        <id>P13473-2</id>
    </interactant>
    <interactant intactId="EBI-2510853">
        <id>Q1L5Z9</id>
        <label>LONRF2</label>
    </interactant>
    <organismsDiffer>false</organismsDiffer>
    <experiments>3</experiments>
</comment>
<comment type="interaction">
    <interactant intactId="EBI-21591415">
        <id>P13473-2</id>
    </interactant>
    <interactant intactId="EBI-749562">
        <id>Q96JB6</id>
        <label>LOXL4</label>
    </interactant>
    <organismsDiffer>false</organismsDiffer>
    <experiments>3</experiments>
</comment>
<comment type="interaction">
    <interactant intactId="EBI-21591415">
        <id>P13473-2</id>
    </interactant>
    <interactant intactId="EBI-14752528">
        <id>Q8IYG6</id>
        <label>LRRC56</label>
    </interactant>
    <organismsDiffer>false</organismsDiffer>
    <experiments>3</experiments>
</comment>
<comment type="interaction">
    <interactant intactId="EBI-21591415">
        <id>P13473-2</id>
    </interactant>
    <interactant intactId="EBI-25872860">
        <id>Q5VYH9</id>
        <label>LY9</label>
    </interactant>
    <organismsDiffer>false</organismsDiffer>
    <experiments>3</experiments>
</comment>
<comment type="interaction">
    <interactant intactId="EBI-21591415">
        <id>P13473-2</id>
    </interactant>
    <interactant intactId="EBI-21916939">
        <id>P0DP58-2</id>
        <label>LYNX1</label>
    </interactant>
    <organismsDiffer>false</organismsDiffer>
    <experiments>3</experiments>
</comment>
<comment type="interaction">
    <interactant intactId="EBI-21591415">
        <id>P13473-2</id>
    </interactant>
    <interactant intactId="EBI-10182930">
        <id>P43361</id>
        <label>MAGEA8</label>
    </interactant>
    <organismsDiffer>false</organismsDiffer>
    <experiments>3</experiments>
</comment>
<comment type="interaction">
    <interactant intactId="EBI-21591415">
        <id>P13473-2</id>
    </interactant>
    <interactant intactId="EBI-741835">
        <id>Q96M61</id>
        <label>MAGEB18</label>
    </interactant>
    <organismsDiffer>false</organismsDiffer>
    <experiments>3</experiments>
</comment>
<comment type="interaction">
    <interactant intactId="EBI-21591415">
        <id>P13473-2</id>
    </interactant>
    <interactant intactId="EBI-944295">
        <id>Q969L2</id>
        <label>MAL2</label>
    </interactant>
    <organismsDiffer>false</organismsDiffer>
    <experiments>3</experiments>
</comment>
<comment type="interaction">
    <interactant intactId="EBI-21591415">
        <id>P13473-2</id>
    </interactant>
    <interactant intactId="EBI-3911344">
        <id>P27338</id>
        <label>MAOB</label>
    </interactant>
    <organismsDiffer>false</organismsDiffer>
    <experiments>3</experiments>
</comment>
<comment type="interaction">
    <interactant intactId="EBI-21591415">
        <id>P13473-2</id>
    </interactant>
    <interactant intactId="EBI-2689785">
        <id>Q8NI22</id>
        <label>MCFD2</label>
    </interactant>
    <organismsDiffer>false</organismsDiffer>
    <experiments>3</experiments>
</comment>
<comment type="interaction">
    <interactant intactId="EBI-21591415">
        <id>P13473-2</id>
    </interactant>
    <interactant intactId="EBI-10174029">
        <id>A6NJ78-4</id>
        <label>METTL15</label>
    </interactant>
    <organismsDiffer>false</organismsDiffer>
    <experiments>3</experiments>
</comment>
<comment type="interaction">
    <interactant intactId="EBI-21591415">
        <id>P13473-2</id>
    </interactant>
    <interactant intactId="EBI-25835557">
        <id>A0A0A0MR05</id>
        <label>MLST8</label>
    </interactant>
    <organismsDiffer>false</organismsDiffer>
    <experiments>3</experiments>
</comment>
<comment type="interaction">
    <interactant intactId="EBI-21591415">
        <id>P13473-2</id>
    </interactant>
    <interactant intactId="EBI-21823432">
        <id>P34949-2</id>
        <label>MPI</label>
    </interactant>
    <organismsDiffer>false</organismsDiffer>
    <experiments>3</experiments>
</comment>
<comment type="interaction">
    <interactant intactId="EBI-21591415">
        <id>P13473-2</id>
    </interactant>
    <interactant intactId="EBI-747381">
        <id>Q9BV20</id>
        <label>MRI1</label>
    </interactant>
    <organismsDiffer>false</organismsDiffer>
    <experiments>3</experiments>
</comment>
<comment type="interaction">
    <interactant intactId="EBI-21591415">
        <id>P13473-2</id>
    </interactant>
    <interactant intactId="EBI-25835707">
        <id>Q6IN84-2</id>
        <label>MRM1</label>
    </interactant>
    <organismsDiffer>false</organismsDiffer>
    <experiments>3</experiments>
</comment>
<comment type="interaction">
    <interactant intactId="EBI-21591415">
        <id>P13473-2</id>
    </interactant>
    <interactant intactId="EBI-17937277">
        <id>Q8N387</id>
        <label>MUC15</label>
    </interactant>
    <organismsDiffer>false</organismsDiffer>
    <experiments>3</experiments>
</comment>
<comment type="interaction">
    <interactant intactId="EBI-21591415">
        <id>P13473-2</id>
    </interactant>
    <interactant intactId="EBI-9088235">
        <id>A2RUH7</id>
        <label>MYBPHL</label>
    </interactant>
    <organismsDiffer>false</organismsDiffer>
    <experiments>3</experiments>
</comment>
<comment type="interaction">
    <interactant intactId="EBI-21591415">
        <id>P13473-2</id>
    </interactant>
    <interactant intactId="EBI-447544">
        <id>P01106</id>
        <label>MYC</label>
    </interactant>
    <organismsDiffer>false</organismsDiffer>
    <experiments>3</experiments>
</comment>
<comment type="interaction">
    <interactant intactId="EBI-21591415">
        <id>P13473-2</id>
    </interactant>
    <interactant intactId="EBI-12260336">
        <id>Q9H7X0</id>
        <label>NAA60</label>
    </interactant>
    <organismsDiffer>false</organismsDiffer>
    <experiments>3</experiments>
</comment>
<comment type="interaction">
    <interactant intactId="EBI-21591415">
        <id>P13473-2</id>
    </interactant>
    <interactant intactId="EBI-25834665">
        <id>Q15742-2</id>
        <label>NAB2</label>
    </interactant>
    <organismsDiffer>false</organismsDiffer>
    <experiments>3</experiments>
</comment>
<comment type="interaction">
    <interactant intactId="EBI-21591415">
        <id>P13473-2</id>
    </interactant>
    <interactant intactId="EBI-11526455">
        <id>Q9UJ70-2</id>
        <label>NAGK</label>
    </interactant>
    <organismsDiffer>false</organismsDiffer>
    <experiments>3</experiments>
</comment>
<comment type="interaction">
    <interactant intactId="EBI-21591415">
        <id>P13473-2</id>
    </interactant>
    <interactant intactId="EBI-10986258">
        <id>Q69YL0</id>
        <label>NCBP2AS2</label>
    </interactant>
    <organismsDiffer>false</organismsDiffer>
    <experiments>3</experiments>
</comment>
<comment type="interaction">
    <interactant intactId="EBI-21591415">
        <id>P13473-2</id>
    </interactant>
    <interactant intactId="EBI-389728">
        <id>P25208</id>
        <label>NFYB</label>
    </interactant>
    <organismsDiffer>false</organismsDiffer>
    <experiments>3</experiments>
</comment>
<comment type="interaction">
    <interactant intactId="EBI-21591415">
        <id>P13473-2</id>
    </interactant>
    <interactant intactId="EBI-12329915">
        <id>Q8NDH3-5</id>
        <label>NPEPL1</label>
    </interactant>
    <organismsDiffer>false</organismsDiffer>
    <experiments>3</experiments>
</comment>
<comment type="interaction">
    <interactant intactId="EBI-21591415">
        <id>P13473-2</id>
    </interactant>
    <interactant intactId="EBI-25840002">
        <id>O15130-2</id>
        <label>NPFF</label>
    </interactant>
    <organismsDiffer>false</organismsDiffer>
    <experiments>3</experiments>
</comment>
<comment type="interaction">
    <interactant intactId="EBI-21591415">
        <id>P13473-2</id>
    </interactant>
    <interactant intactId="EBI-25834643">
        <id>P36639-4</id>
        <label>NUDT1</label>
    </interactant>
    <organismsDiffer>false</organismsDiffer>
    <experiments>3</experiments>
</comment>
<comment type="interaction">
    <interactant intactId="EBI-21591415">
        <id>P13473-2</id>
    </interactant>
    <interactant intactId="EBI-2563158">
        <id>Q8NFH4</id>
        <label>NUP37</label>
    </interactant>
    <organismsDiffer>false</organismsDiffer>
    <experiments>3</experiments>
</comment>
<comment type="interaction">
    <interactant intactId="EBI-21591415">
        <id>P13473-2</id>
    </interactant>
    <interactant intactId="EBI-1059321">
        <id>Q8NFH3</id>
        <label>NUP43</label>
    </interactant>
    <organismsDiffer>false</organismsDiffer>
    <experiments>3</experiments>
</comment>
<comment type="interaction">
    <interactant intactId="EBI-21591415">
        <id>P13473-2</id>
    </interactant>
    <interactant intactId="EBI-741048">
        <id>Q7Z3B4</id>
        <label>NUP54</label>
    </interactant>
    <organismsDiffer>false</organismsDiffer>
    <experiments>3</experiments>
</comment>
<comment type="interaction">
    <interactant intactId="EBI-21591415">
        <id>P13473-2</id>
    </interactant>
    <interactant intactId="EBI-22006224">
        <id>Q6N063-2</id>
        <label>OGFOD2</label>
    </interactant>
    <organismsDiffer>false</organismsDiffer>
    <experiments>3</experiments>
</comment>
<comment type="interaction">
    <interactant intactId="EBI-21591415">
        <id>P13473-2</id>
    </interactant>
    <interactant intactId="EBI-25830200">
        <id>Q6GQQ9-2</id>
        <label>OTUD7B</label>
    </interactant>
    <organismsDiffer>false</organismsDiffer>
    <experiments>3</experiments>
</comment>
<comment type="interaction">
    <interactant intactId="EBI-21591415">
        <id>P13473-2</id>
    </interactant>
    <interactant intactId="EBI-750317">
        <id>Q99447</id>
        <label>PCYT2</label>
    </interactant>
    <organismsDiffer>false</organismsDiffer>
    <experiments>3</experiments>
</comment>
<comment type="interaction">
    <interactant intactId="EBI-21591415">
        <id>P13473-2</id>
    </interactant>
    <interactant intactId="EBI-12080840">
        <id>P27815-4</id>
        <label>PDE4A</label>
    </interactant>
    <organismsDiffer>false</organismsDiffer>
    <experiments>3</experiments>
</comment>
<comment type="interaction">
    <interactant intactId="EBI-21591415">
        <id>P13473-2</id>
    </interactant>
    <interactant intactId="EBI-11337896">
        <id>A5PLL7</id>
        <label>PEDS1</label>
    </interactant>
    <organismsDiffer>false</organismsDiffer>
    <experiments>3</experiments>
</comment>
<comment type="interaction">
    <interactant intactId="EBI-21591415">
        <id>P13473-2</id>
    </interactant>
    <interactant intactId="EBI-722852">
        <id>Q9BUL5</id>
        <label>PHF23</label>
    </interactant>
    <organismsDiffer>false</organismsDiffer>
    <experiments>3</experiments>
</comment>
<comment type="interaction">
    <interactant intactId="EBI-21591415">
        <id>P13473-2</id>
    </interactant>
    <interactant intactId="EBI-1042490">
        <id>Q00169</id>
        <label>PITPNA</label>
    </interactant>
    <organismsDiffer>false</organismsDiffer>
    <experiments>3</experiments>
</comment>
<comment type="interaction">
    <interactant intactId="EBI-21591415">
        <id>P13473-2</id>
    </interactant>
    <interactant intactId="EBI-1047143">
        <id>P48739</id>
        <label>PITPNB</label>
    </interactant>
    <organismsDiffer>false</organismsDiffer>
    <experiments>3</experiments>
</comment>
<comment type="interaction">
    <interactant intactId="EBI-21591415">
        <id>P13473-2</id>
    </interactant>
    <interactant intactId="EBI-21503705">
        <id>Q58EX7-2</id>
        <label>PLEKHG4</label>
    </interactant>
    <organismsDiffer>false</organismsDiffer>
    <experiments>3</experiments>
</comment>
<comment type="interaction">
    <interactant intactId="EBI-21591415">
        <id>P13473-2</id>
    </interactant>
    <interactant intactId="EBI-725795">
        <id>O60664</id>
        <label>PLIN3</label>
    </interactant>
    <organismsDiffer>false</organismsDiffer>
    <experiments>3</experiments>
</comment>
<comment type="interaction">
    <interactant intactId="EBI-21591415">
        <id>P13473-2</id>
    </interactant>
    <interactant intactId="EBI-712752">
        <id>Q14181</id>
        <label>POLA2</label>
    </interactant>
    <organismsDiffer>false</organismsDiffer>
    <experiments>3</experiments>
</comment>
<comment type="interaction">
    <interactant intactId="EBI-21591415">
        <id>P13473-2</id>
    </interactant>
    <interactant intactId="EBI-359498">
        <id>P0DPB6</id>
        <label>POLR1D</label>
    </interactant>
    <organismsDiffer>false</organismsDiffer>
    <experiments>3</experiments>
</comment>
<comment type="interaction">
    <interactant intactId="EBI-21591415">
        <id>P13473-2</id>
    </interactant>
    <interactant intactId="EBI-395202">
        <id>P36954</id>
        <label>POLR2I</label>
    </interactant>
    <organismsDiffer>false</organismsDiffer>
    <experiments>3</experiments>
</comment>
<comment type="interaction">
    <interactant intactId="EBI-21591415">
        <id>P13473-2</id>
    </interactant>
    <interactant intactId="EBI-78615">
        <id>Q07869</id>
        <label>PPARA</label>
    </interactant>
    <organismsDiffer>false</organismsDiffer>
    <experiments>3</experiments>
</comment>
<comment type="interaction">
    <interactant intactId="EBI-21591415">
        <id>P13473-2</id>
    </interactant>
    <interactant intactId="EBI-1048104">
        <id>O60927</id>
        <label>PPP1R11</label>
    </interactant>
    <organismsDiffer>false</organismsDiffer>
    <experiments>3</experiments>
</comment>
<comment type="interaction">
    <interactant intactId="EBI-21591415">
        <id>P13473-2</id>
    </interactant>
    <interactant intactId="EBI-25835994">
        <id>Q6ZMI0-5</id>
        <label>PPP1R21</label>
    </interactant>
    <organismsDiffer>false</organismsDiffer>
    <experiments>3</experiments>
</comment>
<comment type="interaction">
    <interactant intactId="EBI-21591415">
        <id>P13473-2</id>
    </interactant>
    <interactant intactId="EBI-25836043">
        <id>Q8NCQ7-2</id>
        <label>PROCA1</label>
    </interactant>
    <organismsDiffer>false</organismsDiffer>
    <experiments>3</experiments>
</comment>
<comment type="interaction">
    <interactant intactId="EBI-21591415">
        <id>P13473-2</id>
    </interactant>
    <interactant intactId="EBI-25836834">
        <id>P23942</id>
        <label>PRPH2</label>
    </interactant>
    <organismsDiffer>false</organismsDiffer>
    <experiments>3</experiments>
</comment>
<comment type="interaction">
    <interactant intactId="EBI-21591415">
        <id>P13473-2</id>
    </interactant>
    <interactant intactId="EBI-948821">
        <id>P41222</id>
        <label>PTGDS</label>
    </interactant>
    <organismsDiffer>false</organismsDiffer>
    <experiments>3</experiments>
</comment>
<comment type="interaction">
    <interactant intactId="EBI-21591415">
        <id>P13473-2</id>
    </interactant>
    <interactant intactId="EBI-710431">
        <id>P29074</id>
        <label>PTPN4</label>
    </interactant>
    <organismsDiffer>false</organismsDiffer>
    <experiments>3</experiments>
</comment>
<comment type="interaction">
    <interactant intactId="EBI-21591415">
        <id>P13473-2</id>
    </interactant>
    <interactant intactId="EBI-25835884">
        <id>Q8WUD1-2</id>
        <label>RAB2B</label>
    </interactant>
    <organismsDiffer>false</organismsDiffer>
    <experiments>3</experiments>
</comment>
<comment type="interaction">
    <interactant intactId="EBI-21591415">
        <id>P13473-2</id>
    </interactant>
    <interactant intactId="EBI-10699389">
        <id>Q5R372-9</id>
        <label>RABGAP1L</label>
    </interactant>
    <organismsDiffer>false</organismsDiffer>
    <experiments>3</experiments>
</comment>
<comment type="interaction">
    <interactant intactId="EBI-21591415">
        <id>P13473-2</id>
    </interactant>
    <interactant intactId="EBI-9089733">
        <id>Q9HD47-3</id>
        <label>RANGRF</label>
    </interactant>
    <organismsDiffer>false</organismsDiffer>
    <experiments>3</experiments>
</comment>
<comment type="interaction">
    <interactant intactId="EBI-21591415">
        <id>P13473-2</id>
    </interactant>
    <interactant intactId="EBI-620823">
        <id>Q09028</id>
        <label>RBBP4</label>
    </interactant>
    <organismsDiffer>false</organismsDiffer>
    <experiments>3</experiments>
</comment>
<comment type="interaction">
    <interactant intactId="EBI-21591415">
        <id>P13473-2</id>
    </interactant>
    <interactant intactId="EBI-395290">
        <id>Q14498</id>
        <label>RBM39</label>
    </interactant>
    <organismsDiffer>false</organismsDiffer>
    <experiments>3</experiments>
</comment>
<comment type="interaction">
    <interactant intactId="EBI-21591415">
        <id>P13473-2</id>
    </interactant>
    <interactant intactId="EBI-14065960">
        <id>Q96HR9-2</id>
        <label>REEP6</label>
    </interactant>
    <organismsDiffer>false</organismsDiffer>
    <experiments>3</experiments>
</comment>
<comment type="interaction">
    <interactant intactId="EBI-21591415">
        <id>P13473-2</id>
    </interactant>
    <interactant intactId="EBI-73886">
        <id>Q04206</id>
        <label>RELA</label>
    </interactant>
    <organismsDiffer>false</organismsDiffer>
    <experiments>3</experiments>
</comment>
<comment type="interaction">
    <interactant intactId="EBI-21591415">
        <id>P13473-2</id>
    </interactant>
    <interactant intactId="EBI-25834767">
        <id>P47804-3</id>
        <label>RGR</label>
    </interactant>
    <organismsDiffer>false</organismsDiffer>
    <experiments>3</experiments>
</comment>
<comment type="interaction">
    <interactant intactId="EBI-21591415">
        <id>P13473-2</id>
    </interactant>
    <interactant intactId="EBI-1055287">
        <id>Q15382</id>
        <label>RHEB</label>
    </interactant>
    <organismsDiffer>false</organismsDiffer>
    <experiments>4</experiments>
</comment>
<comment type="interaction">
    <interactant intactId="EBI-21591415">
        <id>P13473-2</id>
    </interactant>
    <interactant intactId="EBI-9091816">
        <id>Q9NPQ8-4</id>
        <label>RIC8A</label>
    </interactant>
    <organismsDiffer>false</organismsDiffer>
    <experiments>3</experiments>
</comment>
<comment type="interaction">
    <interactant intactId="EBI-21591415">
        <id>P13473-2</id>
    </interactant>
    <interactant intactId="EBI-752313">
        <id>Q06587</id>
        <label>RING1</label>
    </interactant>
    <organismsDiffer>false</organismsDiffer>
    <experiments>3</experiments>
</comment>
<comment type="interaction">
    <interactant intactId="EBI-21591415">
        <id>P13473-2</id>
    </interactant>
    <interactant intactId="EBI-714023">
        <id>Q8N5U6</id>
        <label>RNF10</label>
    </interactant>
    <organismsDiffer>false</organismsDiffer>
    <experiments>3</experiments>
</comment>
<comment type="interaction">
    <interactant intactId="EBI-21591415">
        <id>P13473-2</id>
    </interactant>
    <interactant intactId="EBI-712189">
        <id>Q96IZ7</id>
        <label>RSRC1</label>
    </interactant>
    <organismsDiffer>false</organismsDiffer>
    <experiments>3</experiments>
</comment>
<comment type="interaction">
    <interactant intactId="EBI-21591415">
        <id>P13473-2</id>
    </interactant>
    <interactant intactId="EBI-10248967">
        <id>Q66K80</id>
        <label>RUSC1-AS1</label>
    </interactant>
    <organismsDiffer>false</organismsDiffer>
    <experiments>3</experiments>
</comment>
<comment type="interaction">
    <interactant intactId="EBI-21591415">
        <id>P13473-2</id>
    </interactant>
    <interactant intactId="EBI-954338">
        <id>O15126</id>
        <label>SCAMP1</label>
    </interactant>
    <organismsDiffer>false</organismsDiffer>
    <experiments>3</experiments>
</comment>
<comment type="interaction">
    <interactant intactId="EBI-21591415">
        <id>P13473-2</id>
    </interactant>
    <interactant intactId="EBI-25834804">
        <id>P22307-3</id>
        <label>SCP2</label>
    </interactant>
    <organismsDiffer>false</organismsDiffer>
    <experiments>3</experiments>
</comment>
<comment type="interaction">
    <interactant intactId="EBI-21591415">
        <id>P13473-2</id>
    </interactant>
    <interactant intactId="EBI-1389808">
        <id>Q9BRK5</id>
        <label>SDF4</label>
    </interactant>
    <organismsDiffer>false</organismsDiffer>
    <experiments>3</experiments>
</comment>
<comment type="interaction">
    <interactant intactId="EBI-21591415">
        <id>P13473-2</id>
    </interactant>
    <interactant intactId="EBI-9089805">
        <id>Q9NTN9-3</id>
        <label>SEMA4G</label>
    </interactant>
    <organismsDiffer>false</organismsDiffer>
    <experiments>3</experiments>
</comment>
<comment type="interaction">
    <interactant intactId="EBI-21591415">
        <id>P13473-2</id>
    </interactant>
    <interactant intactId="EBI-296557">
        <id>P01011</id>
        <label>SERPINA3</label>
    </interactant>
    <organismsDiffer>false</organismsDiffer>
    <experiments>3</experiments>
</comment>
<comment type="interaction">
    <interactant intactId="EBI-21591415">
        <id>P13473-2</id>
    </interactant>
    <interactant intactId="EBI-1171999">
        <id>Q9BWM7</id>
        <label>SFXN3</label>
    </interactant>
    <organismsDiffer>false</organismsDiffer>
    <experiments>4</experiments>
</comment>
<comment type="interaction">
    <interactant intactId="EBI-21591415">
        <id>P13473-2</id>
    </interactant>
    <interactant intactId="EBI-749607">
        <id>Q9NR46</id>
        <label>SH3GLB2</label>
    </interactant>
    <organismsDiffer>false</organismsDiffer>
    <experiments>3</experiments>
</comment>
<comment type="interaction">
    <interactant intactId="EBI-21591415">
        <id>P13473-2</id>
    </interactant>
    <interactant intactId="EBI-10818532">
        <id>Q9BZQ2</id>
        <label>SHCBP1L</label>
    </interactant>
    <organismsDiffer>false</organismsDiffer>
    <experiments>3</experiments>
</comment>
<comment type="interaction">
    <interactant intactId="EBI-21591415">
        <id>P13473-2</id>
    </interactant>
    <interactant intactId="EBI-9092164">
        <id>O60902-3</id>
        <label>SHOX2</label>
    </interactant>
    <organismsDiffer>false</organismsDiffer>
    <experiments>3</experiments>
</comment>
<comment type="interaction">
    <interactant intactId="EBI-21591415">
        <id>P13473-2</id>
    </interactant>
    <interactant intactId="EBI-727085">
        <id>O43772</id>
        <label>SLC25A20</label>
    </interactant>
    <organismsDiffer>false</organismsDiffer>
    <experiments>3</experiments>
</comment>
<comment type="interaction">
    <interactant intactId="EBI-21591415">
        <id>P13473-2</id>
    </interactant>
    <interactant intactId="EBI-2822550">
        <id>Q8IYM2</id>
        <label>SLFN12</label>
    </interactant>
    <organismsDiffer>false</organismsDiffer>
    <experiments>3</experiments>
</comment>
<comment type="interaction">
    <interactant intactId="EBI-21591415">
        <id>P13473-2</id>
    </interactant>
    <interactant intactId="EBI-3232100">
        <id>Q86US8</id>
        <label>SMG6</label>
    </interactant>
    <organismsDiffer>false</organismsDiffer>
    <experiments>3</experiments>
</comment>
<comment type="interaction">
    <interactant intactId="EBI-21591415">
        <id>P13473-2</id>
    </interactant>
    <interactant intactId="EBI-2874543">
        <id>Q96EX1</id>
        <label>SMIM12</label>
    </interactant>
    <organismsDiffer>false</organismsDiffer>
    <experiments>3</experiments>
</comment>
<comment type="interaction">
    <interactant intactId="EBI-21591415">
        <id>P13473-2</id>
    </interactant>
    <interactant intactId="EBI-985879">
        <id>P37840</id>
        <label>SNCA</label>
    </interactant>
    <organismsDiffer>false</organismsDiffer>
    <experiments>3</experiments>
</comment>
<comment type="interaction">
    <interactant intactId="EBI-21591415">
        <id>P13473-2</id>
    </interactant>
    <interactant intactId="EBI-747719">
        <id>Q96H20</id>
        <label>SNF8</label>
    </interactant>
    <organismsDiffer>false</organismsDiffer>
    <experiments>3</experiments>
</comment>
<comment type="interaction">
    <interactant intactId="EBI-21591415">
        <id>P13473-2</id>
    </interactant>
    <interactant intactId="EBI-2643803">
        <id>Q8N0X7</id>
        <label>SPART</label>
    </interactant>
    <organismsDiffer>false</organismsDiffer>
    <experiments>3</experiments>
</comment>
<comment type="interaction">
    <interactant intactId="EBI-21591415">
        <id>P13473-2</id>
    </interactant>
    <interactant intactId="EBI-3923692">
        <id>Q496A3</id>
        <label>SPATS1</label>
    </interactant>
    <organismsDiffer>false</organismsDiffer>
    <experiments>3</experiments>
</comment>
<comment type="interaction">
    <interactant intactId="EBI-21591415">
        <id>P13473-2</id>
    </interactant>
    <interactant intactId="EBI-12512419">
        <id>Q9NYA1-2</id>
        <label>SPHK1</label>
    </interactant>
    <organismsDiffer>false</organismsDiffer>
    <experiments>3</experiments>
</comment>
<comment type="interaction">
    <interactant intactId="EBI-21591415">
        <id>P13473-2</id>
    </interactant>
    <interactant intactId="EBI-21726245">
        <id>Q9BPZ2</id>
        <label>SPIN2B</label>
    </interactant>
    <organismsDiffer>false</organismsDiffer>
    <experiments>3</experiments>
</comment>
<comment type="interaction">
    <interactant intactId="EBI-21591415">
        <id>P13473-2</id>
    </interactant>
    <interactant intactId="EBI-751020">
        <id>Q9P2T0</id>
        <label>SPMAP2</label>
    </interactant>
    <organismsDiffer>false</organismsDiffer>
    <experiments>3</experiments>
</comment>
<comment type="interaction">
    <interactant intactId="EBI-21591415">
        <id>P13473-2</id>
    </interactant>
    <interactant intactId="EBI-354861">
        <id>Q9C004</id>
        <label>SPRY4</label>
    </interactant>
    <organismsDiffer>false</organismsDiffer>
    <experiments>3</experiments>
</comment>
<comment type="interaction">
    <interactant intactId="EBI-21591415">
        <id>P13473-2</id>
    </interactant>
    <interactant intactId="EBI-2659201">
        <id>Q96BD6</id>
        <label>SPSB1</label>
    </interactant>
    <organismsDiffer>false</organismsDiffer>
    <experiments>3</experiments>
</comment>
<comment type="interaction">
    <interactant intactId="EBI-21591415">
        <id>P13473-2</id>
    </interactant>
    <interactant intactId="EBI-17962797">
        <id>Q9BXA5</id>
        <label>SUCNR1</label>
    </interactant>
    <organismsDiffer>false</organismsDiffer>
    <experiments>3</experiments>
</comment>
<comment type="interaction">
    <interactant intactId="EBI-21591415">
        <id>P13473-2</id>
    </interactant>
    <interactant intactId="EBI-21560407">
        <id>Q92797-2</id>
        <label>SYMPK</label>
    </interactant>
    <organismsDiffer>false</organismsDiffer>
    <experiments>3</experiments>
</comment>
<comment type="interaction">
    <interactant intactId="EBI-21591415">
        <id>P13473-2</id>
    </interactant>
    <interactant intactId="EBI-11123832">
        <id>O60506-4</id>
        <label>SYNCRIP</label>
    </interactant>
    <organismsDiffer>false</organismsDiffer>
    <experiments>3</experiments>
</comment>
<comment type="interaction">
    <interactant intactId="EBI-21591415">
        <id>P13473-2</id>
    </interactant>
    <interactant intactId="EBI-9071725">
        <id>P08247</id>
        <label>SYP</label>
    </interactant>
    <organismsDiffer>false</organismsDiffer>
    <experiments>3</experiments>
</comment>
<comment type="interaction">
    <interactant intactId="EBI-21591415">
        <id>P13473-2</id>
    </interactant>
    <interactant intactId="EBI-10238936">
        <id>Q17RD7</id>
        <label>SYT16</label>
    </interactant>
    <organismsDiffer>false</organismsDiffer>
    <experiments>3</experiments>
</comment>
<comment type="interaction">
    <interactant intactId="EBI-21591415">
        <id>P13473-2</id>
    </interactant>
    <interactant intactId="EBI-2824328">
        <id>O95947</id>
        <label>TBX6</label>
    </interactant>
    <organismsDiffer>false</organismsDiffer>
    <experiments>3</experiments>
</comment>
<comment type="interaction">
    <interactant intactId="EBI-21591415">
        <id>P13473-2</id>
    </interactant>
    <interactant intactId="EBI-954089">
        <id>O15273</id>
        <label>TCAP</label>
    </interactant>
    <organismsDiffer>false</organismsDiffer>
    <experiments>3</experiments>
</comment>
<comment type="interaction">
    <interactant intactId="EBI-21591415">
        <id>P13473-2</id>
    </interactant>
    <interactant intactId="EBI-2562799">
        <id>Q86WV5</id>
        <label>TEN1</label>
    </interactant>
    <organismsDiffer>false</organismsDiffer>
    <experiments>3</experiments>
</comment>
<comment type="interaction">
    <interactant intactId="EBI-21591415">
        <id>P13473-2</id>
    </interactant>
    <interactant intactId="EBI-711018">
        <id>P54274-2</id>
        <label>TERF1</label>
    </interactant>
    <organismsDiffer>false</organismsDiffer>
    <experiments>3</experiments>
</comment>
<comment type="interaction">
    <interactant intactId="EBI-21591415">
        <id>P13473-2</id>
    </interactant>
    <interactant intactId="EBI-2562368">
        <id>P22735</id>
        <label>TGM1</label>
    </interactant>
    <organismsDiffer>false</organismsDiffer>
    <experiments>3</experiments>
</comment>
<comment type="interaction">
    <interactant intactId="EBI-21591415">
        <id>P13473-2</id>
    </interactant>
    <interactant intactId="EBI-12027348">
        <id>O43548</id>
        <label>TGM5</label>
    </interactant>
    <organismsDiffer>false</organismsDiffer>
    <experiments>3</experiments>
</comment>
<comment type="interaction">
    <interactant intactId="EBI-21591415">
        <id>P13473-2</id>
    </interactant>
    <interactant intactId="EBI-3920747">
        <id>Q9NQ88</id>
        <label>TIGAR</label>
    </interactant>
    <organismsDiffer>false</organismsDiffer>
    <experiments>3</experiments>
</comment>
<comment type="interaction">
    <interactant intactId="EBI-21591415">
        <id>P13473-2</id>
    </interactant>
    <interactant intactId="EBI-1047996">
        <id>O14925</id>
        <label>TIMM23</label>
    </interactant>
    <organismsDiffer>false</organismsDiffer>
    <experiments>3</experiments>
</comment>
<comment type="interaction">
    <interactant intactId="EBI-21591415">
        <id>P13473-2</id>
    </interactant>
    <interactant intactId="EBI-8633987">
        <id>Q12893</id>
        <label>TMEM115</label>
    </interactant>
    <organismsDiffer>false</organismsDiffer>
    <experiments>3</experiments>
</comment>
<comment type="interaction">
    <interactant intactId="EBI-21591415">
        <id>P13473-2</id>
    </interactant>
    <interactant intactId="EBI-25874374">
        <id>Q8WVE6-2</id>
        <label>TMEM171</label>
    </interactant>
    <organismsDiffer>false</organismsDiffer>
    <experiments>3</experiments>
</comment>
<comment type="interaction">
    <interactant intactId="EBI-21591415">
        <id>P13473-2</id>
    </interactant>
    <interactant intactId="EBI-2821479">
        <id>Q3YBM2</id>
        <label>TMEM176B</label>
    </interactant>
    <organismsDiffer>false</organismsDiffer>
    <experiments>3</experiments>
</comment>
<comment type="interaction">
    <interactant intactId="EBI-21591415">
        <id>P13473-2</id>
    </interactant>
    <interactant intactId="EBI-10242677">
        <id>Q53NU3</id>
        <label>tmp_locus_54</label>
    </interactant>
    <organismsDiffer>false</organismsDiffer>
    <experiments>3</experiments>
</comment>
<comment type="interaction">
    <interactant intactId="EBI-21591415">
        <id>P13473-2</id>
    </interactant>
    <interactant intactId="EBI-1047508">
        <id>Q9NS69</id>
        <label>TOMM22</label>
    </interactant>
    <organismsDiffer>false</organismsDiffer>
    <experiments>3</experiments>
</comment>
<comment type="interaction">
    <interactant intactId="EBI-21591415">
        <id>P13473-2</id>
    </interactant>
    <interactant intactId="EBI-366083">
        <id>P04637</id>
        <label>TP53</label>
    </interactant>
    <organismsDiffer>false</organismsDiffer>
    <experiments>3</experiments>
</comment>
<comment type="interaction">
    <interactant intactId="EBI-21591415">
        <id>P13473-2</id>
    </interactant>
    <interactant intactId="EBI-396540">
        <id>Q12888</id>
        <label>TP53BP1</label>
    </interactant>
    <organismsDiffer>false</organismsDiffer>
    <experiments>3</experiments>
</comment>
<comment type="interaction">
    <interactant intactId="EBI-21591415">
        <id>P13473-2</id>
    </interactant>
    <interactant intactId="EBI-523498">
        <id>O00463</id>
        <label>TRAF5</label>
    </interactant>
    <organismsDiffer>false</organismsDiffer>
    <experiments>3</experiments>
</comment>
<comment type="interaction">
    <interactant intactId="EBI-21591415">
        <id>P13473-2</id>
    </interactant>
    <interactant intactId="EBI-740098">
        <id>P36406</id>
        <label>TRIM23</label>
    </interactant>
    <organismsDiffer>false</organismsDiffer>
    <experiments>3</experiments>
</comment>
<comment type="interaction">
    <interactant intactId="EBI-21591415">
        <id>P13473-2</id>
    </interactant>
    <interactant intactId="EBI-12840050">
        <id>Q9C035-3</id>
        <label>TRIM5</label>
    </interactant>
    <organismsDiffer>false</organismsDiffer>
    <experiments>3</experiments>
</comment>
<comment type="interaction">
    <interactant intactId="EBI-21591415">
        <id>P13473-2</id>
    </interactant>
    <interactant intactId="EBI-11525489">
        <id>Q86WT6-2</id>
        <label>TRIM69</label>
    </interactant>
    <organismsDiffer>false</organismsDiffer>
    <experiments>3</experiments>
</comment>
<comment type="interaction">
    <interactant intactId="EBI-21591415">
        <id>P13473-2</id>
    </interactant>
    <interactant intactId="EBI-17671298">
        <id>Q9H313-4</id>
        <label>TTYH1</label>
    </interactant>
    <organismsDiffer>false</organismsDiffer>
    <experiments>3</experiments>
</comment>
<comment type="interaction">
    <interactant intactId="EBI-21591415">
        <id>P13473-2</id>
    </interactant>
    <interactant intactId="EBI-1103245">
        <id>Q9BQE3</id>
        <label>TUBA1C</label>
    </interactant>
    <organismsDiffer>false</organismsDiffer>
    <experiments>3</experiments>
</comment>
<comment type="interaction">
    <interactant intactId="EBI-21591415">
        <id>P13473-2</id>
    </interactant>
    <interactant intactId="EBI-2339348">
        <id>P49459</id>
        <label>UBE2A</label>
    </interactant>
    <organismsDiffer>false</organismsDiffer>
    <experiments>3</experiments>
</comment>
<comment type="interaction">
    <interactant intactId="EBI-21591415">
        <id>P13473-2</id>
    </interactant>
    <interactant intactId="EBI-2340619">
        <id>P62253</id>
        <label>UBE2G1</label>
    </interactant>
    <organismsDiffer>false</organismsDiffer>
    <experiments>3</experiments>
</comment>
<comment type="interaction">
    <interactant intactId="EBI-21591415">
        <id>P13473-2</id>
    </interactant>
    <interactant intactId="EBI-714860">
        <id>P09936</id>
        <label>UCHL1</label>
    </interactant>
    <organismsDiffer>false</organismsDiffer>
    <experiments>3</experiments>
</comment>
<comment type="interaction">
    <interactant intactId="EBI-21591415">
        <id>P13473-2</id>
    </interactant>
    <interactant intactId="EBI-25835297">
        <id>Q9P1Q0-4</id>
        <label>VPS54</label>
    </interactant>
    <organismsDiffer>false</organismsDiffer>
    <experiments>3</experiments>
</comment>
<comment type="interaction">
    <interactant intactId="EBI-21591415">
        <id>P13473-2</id>
    </interactant>
    <interactant intactId="EBI-10316321">
        <id>Q9NX94</id>
        <label>WBP1L</label>
    </interactant>
    <organismsDiffer>false</organismsDiffer>
    <experiments>3</experiments>
</comment>
<comment type="interaction">
    <interactant intactId="EBI-21591415">
        <id>P13473-2</id>
    </interactant>
    <interactant intactId="EBI-17769315">
        <id>Q6ICG8</id>
        <label>WBP2NL</label>
    </interactant>
    <organismsDiffer>false</organismsDiffer>
    <experiments>3</experiments>
</comment>
<comment type="interaction">
    <interactant intactId="EBI-21591415">
        <id>P13473-2</id>
    </interactant>
    <interactant intactId="EBI-25835937">
        <id>Q8NA23-2</id>
        <label>WDR31</label>
    </interactant>
    <organismsDiffer>false</organismsDiffer>
    <experiments>3</experiments>
</comment>
<comment type="interaction">
    <interactant intactId="EBI-21591415">
        <id>P13473-2</id>
    </interactant>
    <interactant intactId="EBI-1237307">
        <id>Q9BQA1</id>
        <label>WDR77</label>
    </interactant>
    <organismsDiffer>false</organismsDiffer>
    <experiments>3</experiments>
</comment>
<comment type="interaction">
    <interactant intactId="EBI-21591415">
        <id>P13473-2</id>
    </interactant>
    <interactant intactId="EBI-727198">
        <id>O00755</id>
        <label>WNT7A</label>
    </interactant>
    <organismsDiffer>false</organismsDiffer>
    <experiments>3</experiments>
</comment>
<comment type="interaction">
    <interactant intactId="EBI-21591415">
        <id>P13473-2</id>
    </interactant>
    <interactant intactId="EBI-2799703">
        <id>O95070</id>
        <label>YIF1A</label>
    </interactant>
    <organismsDiffer>false</organismsDiffer>
    <experiments>3</experiments>
</comment>
<comment type="interaction">
    <interactant intactId="EBI-21591415">
        <id>P13473-2</id>
    </interactant>
    <interactant intactId="EBI-12956041">
        <id>Q8IWT0-2</id>
        <label>ZBTB8OS</label>
    </interactant>
    <organismsDiffer>false</organismsDiffer>
    <experiments>3</experiments>
</comment>
<comment type="interaction">
    <interactant intactId="EBI-21591415">
        <id>P13473-2</id>
    </interactant>
    <interactant intactId="EBI-14104088">
        <id>Q53FD0-2</id>
        <label>ZC2HC1C</label>
    </interactant>
    <organismsDiffer>false</organismsDiffer>
    <experiments>3</experiments>
</comment>
<comment type="interaction">
    <interactant intactId="EBI-21591415">
        <id>P13473-2</id>
    </interactant>
    <interactant intactId="EBI-25835471">
        <id>Q05CR2</id>
        <label>ZNF248</label>
    </interactant>
    <organismsDiffer>false</organismsDiffer>
    <experiments>3</experiments>
</comment>
<comment type="interaction">
    <interactant intactId="EBI-21591415">
        <id>P13473-2</id>
    </interactant>
    <interactant intactId="EBI-25835852">
        <id>Q96JL9-2</id>
        <label>ZNF333</label>
    </interactant>
    <organismsDiffer>false</organismsDiffer>
    <experiments>3</experiments>
</comment>
<comment type="interaction">
    <interactant intactId="EBI-21591415">
        <id>P13473-2</id>
    </interactant>
    <interactant intactId="EBI-9091553">
        <id>Q96LX8</id>
        <label>ZNF597</label>
    </interactant>
    <organismsDiffer>false</organismsDiffer>
    <experiments>3</experiments>
</comment>
<comment type="interaction">
    <interactant intactId="EBI-21591415">
        <id>P13473-2</id>
    </interactant>
    <interactant intactId="EBI-18036029">
        <id>Q3KNS6-3</id>
        <label>ZNF829</label>
    </interactant>
    <organismsDiffer>false</organismsDiffer>
    <experiments>3</experiments>
</comment>
<comment type="interaction">
    <interactant intactId="EBI-21591415">
        <id>P13473-2</id>
    </interactant>
    <interactant intactId="EBI-723434">
        <id>Q5JTY5</id>
        <label>ZNG1C</label>
    </interactant>
    <organismsDiffer>false</organismsDiffer>
    <experiments>3</experiments>
</comment>
<comment type="interaction">
    <interactant intactId="EBI-21591415">
        <id>P13473-2</id>
    </interactant>
    <interactant intactId="EBI-25834468">
        <id>A0A384MDV8</id>
    </interactant>
    <organismsDiffer>false</organismsDiffer>
    <experiments>3</experiments>
</comment>
<comment type="interaction">
    <interactant intactId="EBI-21591415">
        <id>P13473-2</id>
    </interactant>
    <interactant intactId="EBI-25831617">
        <id>B7Z3E8</id>
    </interactant>
    <organismsDiffer>false</organismsDiffer>
    <experiments>3</experiments>
</comment>
<comment type="interaction">
    <interactant intactId="EBI-21591415">
        <id>P13473-2</id>
    </interactant>
    <interactant intactId="EBI-10259496">
        <id>Q86V28</id>
    </interactant>
    <organismsDiffer>false</organismsDiffer>
    <experiments>3</experiments>
</comment>
<comment type="subcellular location">
    <subcellularLocation>
        <location evidence="4 6 13 14 23">Lysosome membrane</location>
        <topology evidence="4 13">Single-pass type I membrane protein</topology>
    </subcellularLocation>
    <subcellularLocation>
        <location evidence="13">Endosome membrane</location>
        <topology evidence="4 13">Single-pass type I membrane protein</topology>
    </subcellularLocation>
    <subcellularLocation>
        <location evidence="13 23">Cell membrane</location>
        <topology evidence="4 13">Single-pass type I membrane protein</topology>
    </subcellularLocation>
    <subcellularLocation>
        <location evidence="2">Cytoplasmic vesicle</location>
        <location evidence="2">Autophagosome membrane</location>
    </subcellularLocation>
    <text evidence="13">This protein shuttles between lysosomes, endosomes, and the plasma membrane.</text>
</comment>
<comment type="alternative products">
    <event type="alternative splicing"/>
    <isoform>
        <id>P13473-1</id>
        <name>LAMP-2A</name>
        <sequence type="displayed"/>
    </isoform>
    <isoform>
        <id>P13473-2</id>
        <name>LAMP-2B</name>
        <sequence type="described" ref="VSP_003044"/>
    </isoform>
    <isoform>
        <id>P13473-3</id>
        <name>LAMP-2C</name>
        <sequence type="described" ref="VSP_042519"/>
    </isoform>
</comment>
<comment type="tissue specificity">
    <text evidence="21 29">Isoform LAMP-2A is highly expressed in placenta, lung and liver, less in kidney and pancreas, low in brain and skeletal muscle (PubMed:26856698, PubMed:7488019). Isoform LAMP-2B is detected in spleen, thymus, prostate, testis, small intestine, colon, skeletal muscle, brain, placenta, lung, kidney, ovary and pancreas and liver (PubMed:26856698, PubMed:7488019). Isoform LAMP-2C is detected in small intestine, colon, heart, brain, skeletal muscle, and at lower levels in kidney and placenta (PubMed:26856698).</text>
</comment>
<comment type="induction">
    <text evidence="21">In peripheral blood B cells isoform LAMP-2A, LAMP-2B and LAMP-2C are up-regulated in response to treatments that stimulate immune responses via the Toll-like receptors TLR7 or TLR9.</text>
</comment>
<comment type="PTM">
    <text evidence="7 12 15 17 23 30">O- and N-glycosylated; some of the 16 N-linked glycans are polylactosaminoglycans.</text>
</comment>
<comment type="disease" evidence="9 11">
    <disease id="DI-00385">
        <name>Danon disease</name>
        <acronym>DAND</acronym>
        <description>DAND is a lysosomal glycogen storage disease characterized by the clinical triad of cardiomyopathy, vacuolar myopathy and intellectual disability. It is often associated with an accumulation of glycogen in muscle and lysosomes.</description>
        <dbReference type="MIM" id="300257"/>
    </disease>
    <text>The disease is caused by variants affecting the gene represented in this entry.</text>
</comment>
<comment type="similarity">
    <text evidence="4">Belongs to the LAMP family.</text>
</comment>